<gene>
    <name type="primary">ITGB4</name>
</gene>
<reference key="1">
    <citation type="journal article" date="1990" name="EMBO J.">
        <title>Amino acid sequence of a novel integrin beta 4 subunit and primary expression of the mRNA in epithelial cells.</title>
        <authorList>
            <person name="Suzuki S."/>
            <person name="Naitoh Y."/>
        </authorList>
    </citation>
    <scope>NUCLEOTIDE SEQUENCE [MRNA] (ISOFORM BETA-4A)</scope>
    <scope>VARIANT PRO-1779</scope>
</reference>
<reference key="2">
    <citation type="journal article" date="1990" name="EMBO J.">
        <title>Cloning and sequence analysis of beta-4 cDNA: an integrin subunit that contains a unique 118 kd cytoplasmic domain.</title>
        <authorList>
            <person name="Hogervorst F."/>
            <person name="Kuikman I."/>
            <person name="von Dem Borne A.E.G.K."/>
            <person name="Sonnenberg A."/>
        </authorList>
    </citation>
    <scope>NUCLEOTIDE SEQUENCE [MRNA] (ISOFORM BETA-4B)</scope>
    <scope>VARIANT PRO-1779</scope>
</reference>
<reference key="3">
    <citation type="journal article" date="1990" name="J. Cell Biol.">
        <title>Epithelial integrin alpha 6 beta 4: complete primary structure of alpha 6 and variant forms of beta 4.</title>
        <authorList>
            <person name="Tamura R.N."/>
            <person name="Rozzo C."/>
            <person name="Starr L."/>
            <person name="Chambers J."/>
            <person name="Reichardt L.F."/>
            <person name="Cooper H.M."/>
            <person name="Quaranta V."/>
        </authorList>
    </citation>
    <scope>NUCLEOTIDE SEQUENCE [MRNA] (ISOFORM BETA-4C)</scope>
    <source>
        <tissue>Pancreas</tissue>
    </source>
</reference>
<reference key="4">
    <citation type="journal article" date="1997" name="Lab. Invest.">
        <title>Genomic organization of the integrin beta 4 gene (ITGB4): a homozygous splice-site mutation in a patient with junctional epidermolysis bullosa associated with pyloric atresia.</title>
        <authorList>
            <person name="Pulkkinen L."/>
            <person name="Kurtz K.S."/>
            <person name="Xu Y."/>
            <person name="Bruckner-Tuderman L."/>
            <person name="Uitto J."/>
        </authorList>
    </citation>
    <scope>NUCLEOTIDE SEQUENCE [GENOMIC DNA / MRNA] (ISOFORMS BETA-4A; BETA-4B AND BETA-4C)</scope>
    <scope>VARIANTS SER-1764 AND PRO-1779</scope>
</reference>
<reference key="5">
    <citation type="journal article" date="1997" name="Mamm. Genome">
        <title>Genomic organization of the human integrin beta 4 gene.</title>
        <authorList>
            <person name="Iacovacci S."/>
            <person name="Gagnoux-Palacios L."/>
            <person name="Zambruno G."/>
            <person name="Meneguzzi G."/>
            <person name="D'Alessio M."/>
        </authorList>
    </citation>
    <scope>NUCLEOTIDE SEQUENCE [GENOMIC DNA] (ISOFORMS BETA-4A; BETA-4B AND BETA-4C)</scope>
    <scope>VARIANTS SER-1764 AND PRO-1779</scope>
    <source>
        <tissue>Lung</tissue>
    </source>
</reference>
<reference key="6">
    <citation type="submission" date="1999-11" db="EMBL/GenBank/DDBJ databases">
        <authorList>
            <person name="D'Alessio M."/>
        </authorList>
    </citation>
    <scope>SEQUENCE REVISION</scope>
</reference>
<reference key="7">
    <citation type="journal article" date="1997" name="Biochem. Biophys. Res. Commun.">
        <title>The unique cytoplasmic domain of the human integrin variant beta4E is produced by partial retention of intronic sequences.</title>
        <authorList>
            <person name="van Leusden M.R."/>
            <person name="Kuikman I."/>
            <person name="Sonnenberg A."/>
        </authorList>
    </citation>
    <scope>NUCLEOTIDE SEQUENCE [GENOMIC DNA / MRNA] (ISOFORM BETA-4E)</scope>
    <scope>VARIANT PRO-1779</scope>
</reference>
<reference key="8">
    <citation type="journal article" date="2006" name="Nature">
        <title>DNA sequence of human chromosome 17 and analysis of rearrangement in the human lineage.</title>
        <authorList>
            <person name="Zody M.C."/>
            <person name="Garber M."/>
            <person name="Adams D.J."/>
            <person name="Sharpe T."/>
            <person name="Harrow J."/>
            <person name="Lupski J.R."/>
            <person name="Nicholson C."/>
            <person name="Searle S.M."/>
            <person name="Wilming L."/>
            <person name="Young S.K."/>
            <person name="Abouelleil A."/>
            <person name="Allen N.R."/>
            <person name="Bi W."/>
            <person name="Bloom T."/>
            <person name="Borowsky M.L."/>
            <person name="Bugalter B.E."/>
            <person name="Butler J."/>
            <person name="Chang J.L."/>
            <person name="Chen C.-K."/>
            <person name="Cook A."/>
            <person name="Corum B."/>
            <person name="Cuomo C.A."/>
            <person name="de Jong P.J."/>
            <person name="DeCaprio D."/>
            <person name="Dewar K."/>
            <person name="FitzGerald M."/>
            <person name="Gilbert J."/>
            <person name="Gibson R."/>
            <person name="Gnerre S."/>
            <person name="Goldstein S."/>
            <person name="Grafham D.V."/>
            <person name="Grocock R."/>
            <person name="Hafez N."/>
            <person name="Hagopian D.S."/>
            <person name="Hart E."/>
            <person name="Norman C.H."/>
            <person name="Humphray S."/>
            <person name="Jaffe D.B."/>
            <person name="Jones M."/>
            <person name="Kamal M."/>
            <person name="Khodiyar V.K."/>
            <person name="LaButti K."/>
            <person name="Laird G."/>
            <person name="Lehoczky J."/>
            <person name="Liu X."/>
            <person name="Lokyitsang T."/>
            <person name="Loveland J."/>
            <person name="Lui A."/>
            <person name="Macdonald P."/>
            <person name="Major J.E."/>
            <person name="Matthews L."/>
            <person name="Mauceli E."/>
            <person name="McCarroll S.A."/>
            <person name="Mihalev A.H."/>
            <person name="Mudge J."/>
            <person name="Nguyen C."/>
            <person name="Nicol R."/>
            <person name="O'Leary S.B."/>
            <person name="Osoegawa K."/>
            <person name="Schwartz D.C."/>
            <person name="Shaw-Smith C."/>
            <person name="Stankiewicz P."/>
            <person name="Steward C."/>
            <person name="Swarbreck D."/>
            <person name="Venkataraman V."/>
            <person name="Whittaker C.A."/>
            <person name="Yang X."/>
            <person name="Zimmer A.R."/>
            <person name="Bradley A."/>
            <person name="Hubbard T."/>
            <person name="Birren B.W."/>
            <person name="Rogers J."/>
            <person name="Lander E.S."/>
            <person name="Nusbaum C."/>
        </authorList>
    </citation>
    <scope>NUCLEOTIDE SEQUENCE [LARGE SCALE GENOMIC DNA]</scope>
</reference>
<reference key="9">
    <citation type="submission" date="2005-07" db="EMBL/GenBank/DDBJ databases">
        <authorList>
            <person name="Mural R.J."/>
            <person name="Istrail S."/>
            <person name="Sutton G."/>
            <person name="Florea L."/>
            <person name="Halpern A.L."/>
            <person name="Mobarry C.M."/>
            <person name="Lippert R."/>
            <person name="Walenz B."/>
            <person name="Shatkay H."/>
            <person name="Dew I."/>
            <person name="Miller J.R."/>
            <person name="Flanigan M.J."/>
            <person name="Edwards N.J."/>
            <person name="Bolanos R."/>
            <person name="Fasulo D."/>
            <person name="Halldorsson B.V."/>
            <person name="Hannenhalli S."/>
            <person name="Turner R."/>
            <person name="Yooseph S."/>
            <person name="Lu F."/>
            <person name="Nusskern D.R."/>
            <person name="Shue B.C."/>
            <person name="Zheng X.H."/>
            <person name="Zhong F."/>
            <person name="Delcher A.L."/>
            <person name="Huson D.H."/>
            <person name="Kravitz S.A."/>
            <person name="Mouchard L."/>
            <person name="Reinert K."/>
            <person name="Remington K.A."/>
            <person name="Clark A.G."/>
            <person name="Waterman M.S."/>
            <person name="Eichler E.E."/>
            <person name="Adams M.D."/>
            <person name="Hunkapiller M.W."/>
            <person name="Myers E.W."/>
            <person name="Venter J.C."/>
        </authorList>
    </citation>
    <scope>NUCLEOTIDE SEQUENCE [LARGE SCALE GENOMIC DNA]</scope>
</reference>
<reference key="10">
    <citation type="journal article" date="2004" name="Genome Res.">
        <title>The status, quality, and expansion of the NIH full-length cDNA project: the Mammalian Gene Collection (MGC).</title>
        <authorList>
            <consortium name="The MGC Project Team"/>
        </authorList>
    </citation>
    <scope>NUCLEOTIDE SEQUENCE [LARGE SCALE MRNA] (ISOFORM BETA-4A)</scope>
    <scope>VARIANT PRO-1779</scope>
    <source>
        <tissue>Cerebellum</tissue>
    </source>
</reference>
<reference key="11">
    <citation type="journal article" date="1989" name="EMBO J.">
        <title>A novel integrin (alpha E beta 4) from human epithelial cells suggests a fourth family of integrin adhesion receptors.</title>
        <authorList>
            <person name="Kajiji S."/>
            <person name="Tamura R.N."/>
            <person name="Quaranta V."/>
        </authorList>
    </citation>
    <scope>PROTEIN SEQUENCE OF 28-46</scope>
</reference>
<reference key="12">
    <citation type="journal article" date="1994" name="Cell Adhes. Commun.">
        <title>A novel structural variant of the human beta 4 integrin cDNA.</title>
        <authorList>
            <person name="Clarke A.S."/>
            <person name="Lotz M.M."/>
            <person name="Mercurio A.M."/>
        </authorList>
    </citation>
    <scope>ALTERNATIVE SPLICING (ISOFORM BETA-4D)</scope>
</reference>
<reference key="13">
    <citation type="journal article" date="2000" name="Mol. Biol. Cell">
        <title>The N terminus of the transmembrane protein BP180 interacts with the N-terminal domain of BP230, thereby mediating keratin cytoskeleton anchorage to the cell surface at the site of the hemidesmosome.</title>
        <authorList>
            <person name="Hopkinson S.B."/>
            <person name="Jones J.C."/>
        </authorList>
    </citation>
    <scope>INTERACTION WITH DSP</scope>
</reference>
<reference key="14">
    <citation type="journal article" date="2001" name="J. Biol. Chem.">
        <title>The hemidesmosomal protein bullous pemphigoid antigen 1 and the integrin beta 4 subunit bind to ERBIN. Molecular cloning of multiple alternative splice variants of ERBIN and analysis of their tissue expression.</title>
        <authorList>
            <person name="Favre B."/>
            <person name="Fontao L."/>
            <person name="Koster J."/>
            <person name="Shafaatian R."/>
            <person name="Jaunin F."/>
            <person name="Saurat J.-H."/>
            <person name="Sonnenberg A."/>
            <person name="Borradori L."/>
        </authorList>
    </citation>
    <scope>INTERACTION WITH DST</scope>
</reference>
<reference key="15">
    <citation type="journal article" date="2002" name="J. Invest. Dermatol.">
        <title>Deletion of a cytoplasmic domain of integrin beta4 causes epidermolysis bullosa simplex.</title>
        <authorList>
            <person name="Jonkman M.F."/>
            <person name="Pas H.H."/>
            <person name="Nijenhuis M."/>
            <person name="Kloosterhuis G."/>
            <person name="Steege G."/>
        </authorList>
    </citation>
    <scope>INVOLVEMENT IN JEB5A</scope>
</reference>
<reference key="16">
    <citation type="journal article" date="2003" name="J. Cell Sci.">
        <title>Analysis of the interactions between BP180, BP230, plectin and the integrin alpha6beta4 important for hemidesmosome assembly.</title>
        <authorList>
            <person name="Koster J."/>
            <person name="Geerts D."/>
            <person name="Favre B."/>
            <person name="Borradori L."/>
            <person name="Sonnenberg A."/>
        </authorList>
    </citation>
    <scope>FUNCTION</scope>
    <scope>INTERACTION WITH COL17A1 AND DST</scope>
    <scope>CHARACTERIZATION OF VARIANT TRP-1281</scope>
    <scope>SUBCELLULAR LOCATION</scope>
</reference>
<reference key="17">
    <citation type="journal article" date="2004" name="J. Cell Biol.">
        <title>Palmitoylation supports assembly and function of integrin-tetraspanin complexes.</title>
        <authorList>
            <person name="Yang X."/>
            <person name="Kovalenko O.V."/>
            <person name="Tang W."/>
            <person name="Claas C."/>
            <person name="Stipp C.S."/>
            <person name="Hemler M.E."/>
        </authorList>
    </citation>
    <scope>PALMITOYLATION</scope>
</reference>
<reference key="18">
    <citation type="journal article" date="2005" name="J. Proteome Res.">
        <title>Human plasma N-glycoproteome analysis by immunoaffinity subtraction, hydrazide chemistry, and mass spectrometry.</title>
        <authorList>
            <person name="Liu T."/>
            <person name="Qian W.-J."/>
            <person name="Gritsenko M.A."/>
            <person name="Camp D.G. II"/>
            <person name="Monroe M.E."/>
            <person name="Moore R.J."/>
            <person name="Smith R.D."/>
        </authorList>
    </citation>
    <scope>GLYCOSYLATION [LARGE SCALE ANALYSIS] AT ASN-695</scope>
    <source>
        <tissue>Plasma</tissue>
    </source>
</reference>
<reference key="19">
    <citation type="journal article" date="2006" name="Nat. Biotechnol.">
        <title>A probability-based approach for high-throughput protein phosphorylation analysis and site localization.</title>
        <authorList>
            <person name="Beausoleil S.A."/>
            <person name="Villen J."/>
            <person name="Gerber S.A."/>
            <person name="Rush J."/>
            <person name="Gygi S.P."/>
        </authorList>
    </citation>
    <scope>PHOSPHORYLATION [LARGE SCALE ANALYSIS] AT THR-1530</scope>
    <scope>IDENTIFICATION BY MASS SPECTROMETRY [LARGE SCALE ANALYSIS]</scope>
    <source>
        <tissue>Cervix carcinoma</tissue>
    </source>
</reference>
<reference key="20">
    <citation type="journal article" date="2008" name="Mol. Cell">
        <title>Kinase-selective enrichment enables quantitative phosphoproteomics of the kinome across the cell cycle.</title>
        <authorList>
            <person name="Daub H."/>
            <person name="Olsen J.V."/>
            <person name="Bairlein M."/>
            <person name="Gnad F."/>
            <person name="Oppermann F.S."/>
            <person name="Korner R."/>
            <person name="Greff Z."/>
            <person name="Keri G."/>
            <person name="Stemmann O."/>
            <person name="Mann M."/>
        </authorList>
    </citation>
    <scope>IDENTIFICATION BY MASS SPECTROMETRY [LARGE SCALE ANALYSIS]</scope>
    <source>
        <tissue>Cervix carcinoma</tissue>
    </source>
</reference>
<reference key="21">
    <citation type="journal article" date="2009" name="Mol. Biol. Cell">
        <title>BPAG1e maintains keratinocyte polarity through beta4 integrin-mediated modulation of Rac1 and cofilin activities.</title>
        <authorList>
            <person name="Hamill K.J."/>
            <person name="Hopkinson S.B."/>
            <person name="DeBiase P."/>
            <person name="Jones J.C."/>
        </authorList>
    </citation>
    <scope>FUNCTION</scope>
    <scope>INTERACTION WITH RAC1</scope>
    <scope>SUBCELLULAR LOCATION</scope>
</reference>
<reference key="22">
    <citation type="journal article" date="2009" name="Mol. Cell. Proteomics">
        <title>Large-scale proteomics analysis of the human kinome.</title>
        <authorList>
            <person name="Oppermann F.S."/>
            <person name="Gnad F."/>
            <person name="Olsen J.V."/>
            <person name="Hornberger R."/>
            <person name="Greff Z."/>
            <person name="Keri G."/>
            <person name="Mann M."/>
            <person name="Daub H."/>
        </authorList>
    </citation>
    <scope>IDENTIFICATION BY MASS SPECTROMETRY [LARGE SCALE ANALYSIS]</scope>
</reference>
<reference key="23">
    <citation type="journal article" date="2010" name="J. Biol. Chem.">
        <title>Direct binding of the EGF-like domain of neuregulin-1 to integrins ({alpha}v{beta}3 and {alpha}6{beta}4) is involved in neuregulin-1/ErbB signaling.</title>
        <authorList>
            <person name="Ieguchi K."/>
            <person name="Fujita M."/>
            <person name="Ma Z."/>
            <person name="Davari P."/>
            <person name="Taniguchi Y."/>
            <person name="Sekiguchi K."/>
            <person name="Wang B."/>
            <person name="Takada Y.K."/>
            <person name="Takada Y."/>
        </authorList>
    </citation>
    <scope>FUNCTION</scope>
    <scope>BINDING TO NRG1</scope>
    <scope>IDENTIFICATION IN A COMPLEX WITH NRG1 AND ERBB3</scope>
    <scope>NRG1-BINDING REGION</scope>
</reference>
<reference key="24">
    <citation type="journal article" date="2011" name="BMC Syst. Biol.">
        <title>Initial characterization of the human central proteome.</title>
        <authorList>
            <person name="Burkard T.R."/>
            <person name="Planyavsky M."/>
            <person name="Kaupe I."/>
            <person name="Breitwieser F.P."/>
            <person name="Buerckstuemmer T."/>
            <person name="Bennett K.L."/>
            <person name="Superti-Furga G."/>
            <person name="Colinge J."/>
        </authorList>
    </citation>
    <scope>IDENTIFICATION BY MASS SPECTROMETRY [LARGE SCALE ANALYSIS]</scope>
</reference>
<reference key="25">
    <citation type="journal article" date="2012" name="Cell. Mol. Life Sci.">
        <title>Palmitoylation by DHHC3 is critical for the function, expression, and stability of integrin alpha6beta4.</title>
        <authorList>
            <person name="Sharma C."/>
            <person name="Rabinovitz I."/>
            <person name="Hemler M.E."/>
        </authorList>
    </citation>
    <scope>PALMITOYLATION BY DHHC3</scope>
    <scope>SUBCELLULAR LOCATION</scope>
</reference>
<reference key="26">
    <citation type="journal article" date="2012" name="J. Biol. Chem.">
        <title>Cross-talk between integrin alpha6beta4 and insulin-like growth factor-1 receptor (IGF1R) through direct alpha6beta4 binding to IGF1 and subsequent alpha6beta4-IGF1-IGF1R ternary complex formation in anchorage-independent conditions.</title>
        <authorList>
            <person name="Fujita M."/>
            <person name="Ieguchi K."/>
            <person name="Davari P."/>
            <person name="Yamaji S."/>
            <person name="Taniguchi Y."/>
            <person name="Sekiguchi K."/>
            <person name="Takada Y.K."/>
            <person name="Takada Y."/>
        </authorList>
    </citation>
    <scope>FUNCTION</scope>
    <scope>BINDING TO IGF1</scope>
    <scope>IDENTIFICATION IN A COMPLEX WITH IGF1 AND IGF1R</scope>
    <scope>IGF1-BINDING REGION</scope>
</reference>
<reference key="27">
    <citation type="journal article" date="2013" name="J. Proteome Res.">
        <title>Toward a comprehensive characterization of a human cancer cell phosphoproteome.</title>
        <authorList>
            <person name="Zhou H."/>
            <person name="Di Palma S."/>
            <person name="Preisinger C."/>
            <person name="Peng M."/>
            <person name="Polat A.N."/>
            <person name="Heck A.J."/>
            <person name="Mohammed S."/>
        </authorList>
    </citation>
    <scope>PHOSPHORYLATION [LARGE SCALE ANALYSIS] AT SER-1069; SER-1454; SER-1457; SER-1474; THR-1487 AND THR-1530</scope>
    <scope>IDENTIFICATION BY MASS SPECTROMETRY [LARGE SCALE ANALYSIS]</scope>
    <source>
        <tissue>Cervix carcinoma</tissue>
    </source>
</reference>
<reference key="28">
    <citation type="journal article" date="2017" name="PLoS ONE">
        <title>Direct integrin binding to insulin-like growth factor-2 through the C-domain is required for insulin-like growth factor receptor type 1 (IGF1R) signaling.</title>
        <authorList>
            <person name="Cedano Prieto D.M."/>
            <person name="Cheng Y."/>
            <person name="Chang C.C."/>
            <person name="Yu J."/>
            <person name="Takada Y.K."/>
            <person name="Takada Y."/>
        </authorList>
    </citation>
    <scope>FUNCTION</scope>
    <scope>INTERACTION WITH IGF2</scope>
</reference>
<reference key="29">
    <citation type="journal article" date="2019" name="Cell Death Differ.">
        <title>Deletion of TMEM268 inhibits growth of gastric cancer cells by downregulating the ITGB4 signaling pathway.</title>
        <authorList>
            <person name="Hong D."/>
            <person name="Zhang X."/>
            <person name="Li R."/>
            <person name="Yu J."/>
            <person name="Lou Y."/>
            <person name="He Q."/>
            <person name="Li X."/>
            <person name="Xu D."/>
            <person name="Lv P."/>
            <person name="Lin J."/>
            <person name="Chen Y."/>
        </authorList>
    </citation>
    <scope>INTERACTION WITH TMEM268</scope>
</reference>
<reference key="30">
    <citation type="journal article" date="1999" name="EMBO J.">
        <title>Crystal structure of a tandem pair of fibronectin type III domains from the cytoplasmic tail of integrin alpha6beta4.</title>
        <authorList>
            <person name="de Pereda J.M."/>
            <person name="Wiche G."/>
            <person name="Liddington R.C."/>
        </authorList>
    </citation>
    <scope>X-RAY CRYSTALLOGRAPHY (2.15 ANGSTROMS) OF 1126-1320</scope>
</reference>
<reference key="31">
    <citation type="submission" date="2008-04" db="PDB data bank">
        <title>Solution structure of the fibronectin type III domain of human integrin beta-4.</title>
        <authorList>
            <consortium name="RIKEN structural genomics initiative (RSGI)"/>
        </authorList>
    </citation>
    <scope>STRUCTURE BY NMR OF 1515-1622</scope>
</reference>
<reference key="32">
    <citation type="journal article" date="1998" name="Am. J. Hum. Genet.">
        <title>Novel ITGB4 mutations in lethal and nonlethal variants of epidermolysis bullosa with pyloric atresia: missense versus nonsense.</title>
        <authorList>
            <person name="Pulkkinen L."/>
            <person name="Rouan F."/>
            <person name="Bruckner-Tuderman L."/>
            <person name="Wallerstein R."/>
            <person name="Garzon M."/>
            <person name="Brown T."/>
            <person name="Smith L."/>
            <person name="Carter W.G."/>
            <person name="Uitto J."/>
        </authorList>
    </citation>
    <scope>VARIANTS JEB5B TYR-61; CYS-252; ARG-562 AND TRP-1281</scope>
</reference>
<reference key="33">
    <citation type="journal article" date="1998" name="Am. J. Pathol.">
        <title>Epidermolysis bullosa with pyloric atresia: novel mutations in the beta-4 integrin gene (ITGB4).</title>
        <authorList>
            <person name="Pulkkinen L."/>
            <person name="Kim D.U."/>
            <person name="Uitto J."/>
        </authorList>
    </citation>
    <scope>VARIANT JEB5B GLY-245</scope>
</reference>
<reference key="34">
    <citation type="journal article" date="1998" name="Am. J. Pathol.">
        <title>Compound heterozygosity for missense (L156P) and nonsense (R554X) mutations in the beta-4 integrin gene (ITGB4) underlies mild, nonlethal phenotype of epidermolysis bullosa with pyloric atresia.</title>
        <authorList>
            <person name="Pulkkinen L."/>
            <person name="Bruckner-Tuderman L."/>
            <person name="August C."/>
            <person name="Uitto J."/>
        </authorList>
    </citation>
    <scope>VARIANT JEB5B PRO-156</scope>
</reference>
<reference key="35">
    <citation type="journal article" date="1998" name="Br. J. Dermatol.">
        <title>Pyloric atresia-junctional epidermolysis bullosa syndrome: mutations in the integrin beta4 gene (ITGB4) in two unrelated patients with mild disease.</title>
        <authorList>
            <person name="Mellerio J.E."/>
            <person name="Pulkkinen L."/>
            <person name="McMillan J.R."/>
            <person name="Lake B.D."/>
            <person name="Horn H.M."/>
            <person name="Tidman M.J."/>
            <person name="Harper J.I."/>
            <person name="McGrath J.A."/>
            <person name="Uitto J."/>
            <person name="Eady R.A.J."/>
        </authorList>
    </citation>
    <scope>VARIANT JEB5B ARG-38</scope>
</reference>
<reference key="36">
    <citation type="journal article" date="2000" name="Am. J. Kidney Dis.">
        <title>Congenital focal segmental glomerulosclerosis associated with beta4 integrin mutation and epidermolysis bullosa.</title>
        <authorList>
            <person name="Kambham N."/>
            <person name="Tanji N."/>
            <person name="Seigle R.L."/>
            <person name="Markowitz G.S."/>
            <person name="Pulkkinen L."/>
            <person name="Uitto J."/>
            <person name="D'Agati V.D."/>
        </authorList>
    </citation>
    <scope>VARIANT JEB5B TRP-1281</scope>
</reference>
<reference key="37">
    <citation type="journal article" date="2000" name="J. Invest. Dermatol.">
        <title>A homozygous missense mutation in the cytoplasmic tail of beta4 integrin, G931D, that disrupts hemidesmosome assembly and underlies non-Herlitz junctional epidermolysis bullosa without pyloric atresia?</title>
        <authorList>
            <person name="Inoue M."/>
            <person name="Tamai K."/>
            <person name="Shimizu H."/>
            <person name="Owaribe K."/>
            <person name="Nakama T."/>
            <person name="Hashimoto T."/>
            <person name="McGrath J.A."/>
        </authorList>
    </citation>
    <scope>VARIANT JEB5A ASP-931</scope>
</reference>
<reference key="38">
    <citation type="journal article" date="2001" name="Br. J. Dermatol.">
        <title>Alpha 6 beta 4 integrin abnormalities in junctional epidermolysis bullosa with pyloric atresia.</title>
        <authorList>
            <person name="Ashton G.H.S."/>
            <person name="Sorelli P."/>
            <person name="Mellerio J.E."/>
            <person name="Keane F.M."/>
            <person name="Eady R.A.J."/>
            <person name="McGrath J.A."/>
        </authorList>
    </citation>
    <scope>VARIANTS JEB5B</scope>
</reference>
<reference key="39">
    <citation type="journal article" date="2001" name="J. Hum. Genet.">
        <title>Nine novel single-nucleotide polymorphisms in the integrin beta4 (ITGB4) gene in the Japanese population.</title>
        <authorList>
            <person name="Hirano A."/>
            <person name="Nagai H."/>
            <person name="Harada H."/>
            <person name="Terada Y."/>
            <person name="Haga S."/>
            <person name="Kajiwara T."/>
            <person name="Emi M."/>
        </authorList>
    </citation>
    <scope>VARIANTS HIS-98 AND LEU-844</scope>
</reference>
<reference key="40">
    <citation type="journal article" date="2001" name="Pediatr. Res.">
        <title>Epidermolysis bullosa with congenital pyloric atresia: novel mutations in the beta 4 integrin gene (ITGB4) and genotype/phenotype correlations.</title>
        <authorList>
            <person name="Nakano A."/>
            <person name="Pulkkinen L."/>
            <person name="Murrell D."/>
            <person name="Rico J."/>
            <person name="Lucky A.W."/>
            <person name="Garzon M."/>
            <person name="Stevens C.A."/>
            <person name="Robertson S."/>
            <person name="Pfendner E."/>
            <person name="Uitto J."/>
        </authorList>
    </citation>
    <scope>VARIANTS JEB5B TYR-131; CYS-252; ASP-273; CYS-283; ASP-325; PRO-336 AND HIS-1225</scope>
    <scope>VARIANT GLN-1216</scope>
</reference>
<evidence type="ECO:0000250" key="1">
    <source>
        <dbReference type="UniProtKB" id="P05106"/>
    </source>
</evidence>
<evidence type="ECO:0000250" key="2">
    <source>
        <dbReference type="UniProtKB" id="Q64632"/>
    </source>
</evidence>
<evidence type="ECO:0000255" key="3"/>
<evidence type="ECO:0000255" key="4">
    <source>
        <dbReference type="PROSITE-ProRule" id="PRU00316"/>
    </source>
</evidence>
<evidence type="ECO:0000255" key="5">
    <source>
        <dbReference type="PROSITE-ProRule" id="PRU01392"/>
    </source>
</evidence>
<evidence type="ECO:0000256" key="6">
    <source>
        <dbReference type="SAM" id="MobiDB-lite"/>
    </source>
</evidence>
<evidence type="ECO:0000269" key="7">
    <source>
    </source>
</evidence>
<evidence type="ECO:0000269" key="8">
    <source>
    </source>
</evidence>
<evidence type="ECO:0000269" key="9">
    <source>
    </source>
</evidence>
<evidence type="ECO:0000269" key="10">
    <source>
    </source>
</evidence>
<evidence type="ECO:0000269" key="11">
    <source>
    </source>
</evidence>
<evidence type="ECO:0000269" key="12">
    <source>
    </source>
</evidence>
<evidence type="ECO:0000269" key="13">
    <source>
    </source>
</evidence>
<evidence type="ECO:0000269" key="14">
    <source>
    </source>
</evidence>
<evidence type="ECO:0000269" key="15">
    <source>
    </source>
</evidence>
<evidence type="ECO:0000269" key="16">
    <source>
    </source>
</evidence>
<evidence type="ECO:0000269" key="17">
    <source>
    </source>
</evidence>
<evidence type="ECO:0000269" key="18">
    <source>
    </source>
</evidence>
<evidence type="ECO:0000269" key="19">
    <source>
    </source>
</evidence>
<evidence type="ECO:0000269" key="20">
    <source>
    </source>
</evidence>
<evidence type="ECO:0000269" key="21">
    <source>
    </source>
</evidence>
<evidence type="ECO:0000269" key="22">
    <source>
    </source>
</evidence>
<evidence type="ECO:0000269" key="23">
    <source>
    </source>
</evidence>
<evidence type="ECO:0000269" key="24">
    <source>
    </source>
</evidence>
<evidence type="ECO:0000269" key="25">
    <source>
    </source>
</evidence>
<evidence type="ECO:0000269" key="26">
    <source>
    </source>
</evidence>
<evidence type="ECO:0000269" key="27">
    <source>
    </source>
</evidence>
<evidence type="ECO:0000269" key="28">
    <source>
    </source>
</evidence>
<evidence type="ECO:0000269" key="29">
    <source>
    </source>
</evidence>
<evidence type="ECO:0000269" key="30">
    <source>
    </source>
</evidence>
<evidence type="ECO:0000269" key="31">
    <source>
    </source>
</evidence>
<evidence type="ECO:0000269" key="32">
    <source>
    </source>
</evidence>
<evidence type="ECO:0000269" key="33">
    <source>
    </source>
</evidence>
<evidence type="ECO:0000269" key="34">
    <source>
    </source>
</evidence>
<evidence type="ECO:0000303" key="35">
    <source>
    </source>
</evidence>
<evidence type="ECO:0000303" key="36">
    <source>
    </source>
</evidence>
<evidence type="ECO:0000303" key="37">
    <source>
    </source>
</evidence>
<evidence type="ECO:0000303" key="38">
    <source>
    </source>
</evidence>
<evidence type="ECO:0000303" key="39">
    <source>
    </source>
</evidence>
<evidence type="ECO:0000305" key="40"/>
<evidence type="ECO:0007744" key="41">
    <source>
    </source>
</evidence>
<evidence type="ECO:0007744" key="42">
    <source>
    </source>
</evidence>
<evidence type="ECO:0007829" key="43">
    <source>
        <dbReference type="PDB" id="1QG3"/>
    </source>
</evidence>
<evidence type="ECO:0007829" key="44">
    <source>
        <dbReference type="PDB" id="2YRZ"/>
    </source>
</evidence>
<evidence type="ECO:0007829" key="45">
    <source>
        <dbReference type="PDB" id="3F7P"/>
    </source>
</evidence>
<evidence type="ECO:0007829" key="46">
    <source>
        <dbReference type="PDB" id="3F7Q"/>
    </source>
</evidence>
<evidence type="ECO:0007829" key="47">
    <source>
        <dbReference type="PDB" id="3F7R"/>
    </source>
</evidence>
<evidence type="ECO:0007829" key="48">
    <source>
        <dbReference type="PDB" id="3FQ4"/>
    </source>
</evidence>
<evidence type="ECO:0007829" key="49">
    <source>
        <dbReference type="PDB" id="3FSO"/>
    </source>
</evidence>
<evidence type="ECO:0007829" key="50">
    <source>
        <dbReference type="PDB" id="4WTX"/>
    </source>
</evidence>
<evidence type="ECO:0007829" key="51">
    <source>
        <dbReference type="PDB" id="6GVK"/>
    </source>
</evidence>
<name>ITB4_HUMAN</name>
<protein>
    <recommendedName>
        <fullName>Integrin beta-4</fullName>
    </recommendedName>
    <alternativeName>
        <fullName>GP150</fullName>
    </alternativeName>
    <cdAntigenName>CD104</cdAntigenName>
</protein>
<comment type="function">
    <text evidence="14 19 20 22 26">Integrin alpha-6/beta-4 is a receptor for laminin. Plays a critical structural role in the hemidesmosome of epithelial cells. Is required for the regulation of keratinocyte polarity and motility. ITGA6:ITGB4 binds to NRG1 (via EGF domain) and this binding is essential for NRG1-ERBB signaling (PubMed:20682778). ITGA6:ITGB4 binds to IGF1 and this binding is essential for IGF1 signaling (PubMed:22351760). ITGA6:ITGB4 binds to IGF2 and this binding is essential for IGF2 signaling (PubMed:28873464).</text>
</comment>
<comment type="subunit">
    <text evidence="7 13 14 19 20 22 26 27">Heterodimer of an alpha and a beta subunit. Beta-4 associates with alpha-6. Interacts (via cytoplasmic region) with COL17A1 (via cytoplasmic region). Interacts (via cytoplasmic region) with DST isoform 3 (via N-terminus). Isoform beta-4a interacts (via cytoplasmic domain) with DST (via N-terminus). Interacts with RAC1. ITGA6:ITGB4 is found in a ternary complex with NRG1 and ERBB3 (PubMed:20682778). ITGA6:ITGB4 is found in a ternary complex with IGF1 and IGF1R (PubMed:22351760). ITGA6:ITGB4 interacts with IGF2 (PubMed:28873464). Interacts with TMEM268; this interaction prevents ITGB4 degradation (PubMed:30361615).</text>
</comment>
<comment type="interaction">
    <interactant intactId="EBI-948678">
        <id>P16144</id>
    </interactant>
    <interactant intactId="EBI-2875665">
        <id>Q96B67</id>
        <label>ARRDC3</label>
    </interactant>
    <organismsDiffer>false</organismsDiffer>
    <experiments>3</experiments>
</comment>
<comment type="interaction">
    <interactant intactId="EBI-948678">
        <id>P16144</id>
    </interactant>
    <interactant intactId="EBI-10210332">
        <id>P48509</id>
        <label>CD151</label>
    </interactant>
    <organismsDiffer>false</organismsDiffer>
    <experiments>3</experiments>
</comment>
<comment type="interaction">
    <interactant intactId="EBI-948678">
        <id>P16144</id>
    </interactant>
    <interactant intactId="EBI-2436548">
        <id>P23229</id>
        <label>ITGA6</label>
    </interactant>
    <organismsDiffer>false</organismsDiffer>
    <experiments>6</experiments>
</comment>
<comment type="interaction">
    <interactant intactId="EBI-948678">
        <id>P16144</id>
    </interactant>
    <interactant intactId="EBI-297903">
        <id>Q15149</id>
        <label>PLEC</label>
    </interactant>
    <organismsDiffer>false</organismsDiffer>
    <experiments>7</experiments>
</comment>
<comment type="interaction">
    <interactant intactId="EBI-948678">
        <id>P16144</id>
    </interactant>
    <interactant intactId="EBI-702142">
        <id>Q05397</id>
        <label>PTK2</label>
    </interactant>
    <organismsDiffer>false</organismsDiffer>
    <experiments>7</experiments>
</comment>
<comment type="interaction">
    <interactant intactId="EBI-948678">
        <id>P16144</id>
    </interactant>
    <interactant intactId="EBI-10634606">
        <id>O95136</id>
        <label>S1PR2</label>
    </interactant>
    <organismsDiffer>false</organismsDiffer>
    <experiments>2</experiments>
</comment>
<comment type="interaction">
    <interactant intactId="EBI-948678">
        <id>P16144</id>
    </interactant>
    <interactant intactId="EBI-10634734">
        <id>Q99500</id>
        <label>S1PR3</label>
    </interactant>
    <organismsDiffer>false</organismsDiffer>
    <experiments>3</experiments>
</comment>
<comment type="interaction">
    <interactant intactId="EBI-948678">
        <id>P16144</id>
    </interactant>
    <interactant intactId="EBI-5651941">
        <id>Q8R5M8-2</id>
        <label>Cadm1</label>
    </interactant>
    <organismsDiffer>true</organismsDiffer>
    <experiments>3</experiments>
</comment>
<comment type="interaction">
    <interactant intactId="EBI-948678">
        <id>P16144</id>
    </interactant>
    <interactant intactId="EBI-16145475">
        <id>Q9QXS1-3</id>
        <label>Plec</label>
    </interactant>
    <organismsDiffer>true</organismsDiffer>
    <experiments>4</experiments>
</comment>
<comment type="interaction">
    <interactant intactId="EBI-11051601">
        <id>P16144-2</id>
    </interactant>
    <interactant intactId="EBI-10173507">
        <id>Q6UY14-3</id>
        <label>ADAMTSL4</label>
    </interactant>
    <organismsDiffer>false</organismsDiffer>
    <experiments>3</experiments>
</comment>
<comment type="interaction">
    <interactant intactId="EBI-11051601">
        <id>P16144-2</id>
    </interactant>
    <interactant intactId="EBI-743771">
        <id>Q92624</id>
        <label>APPBP2</label>
    </interactant>
    <organismsDiffer>false</organismsDiffer>
    <experiments>3</experiments>
</comment>
<comment type="interaction">
    <interactant intactId="EBI-11051601">
        <id>P16144-2</id>
    </interactant>
    <interactant intactId="EBI-3867333">
        <id>A8MQ03</id>
        <label>CYSRT1</label>
    </interactant>
    <organismsDiffer>false</organismsDiffer>
    <experiments>3</experiments>
</comment>
<comment type="interaction">
    <interactant intactId="EBI-11051601">
        <id>P16144-2</id>
    </interactant>
    <interactant intactId="EBI-947964">
        <id>Q16610</id>
        <label>ECM1</label>
    </interactant>
    <organismsDiffer>false</organismsDiffer>
    <experiments>3</experiments>
</comment>
<comment type="interaction">
    <interactant intactId="EBI-11051601">
        <id>P16144-2</id>
    </interactant>
    <interactant intactId="EBI-740785">
        <id>P49639</id>
        <label>HOXA1</label>
    </interactant>
    <organismsDiffer>false</organismsDiffer>
    <experiments>3</experiments>
</comment>
<comment type="interaction">
    <interactant intactId="EBI-11051601">
        <id>P16144-2</id>
    </interactant>
    <interactant intactId="EBI-10981970">
        <id>Q5T749</id>
        <label>KPRP</label>
    </interactant>
    <organismsDiffer>false</organismsDiffer>
    <experiments>3</experiments>
</comment>
<comment type="interaction">
    <interactant intactId="EBI-11051601">
        <id>P16144-2</id>
    </interactant>
    <interactant intactId="EBI-948001">
        <id>Q15323</id>
        <label>KRT31</label>
    </interactant>
    <organismsDiffer>false</organismsDiffer>
    <experiments>3</experiments>
</comment>
<comment type="interaction">
    <interactant intactId="EBI-11051601">
        <id>P16144-2</id>
    </interactant>
    <interactant intactId="EBI-10171697">
        <id>Q6A162</id>
        <label>KRT40</label>
    </interactant>
    <organismsDiffer>false</organismsDiffer>
    <experiments>3</experiments>
</comment>
<comment type="interaction">
    <interactant intactId="EBI-11051601">
        <id>P16144-2</id>
    </interactant>
    <interactant intactId="EBI-11959885">
        <id>Q07627</id>
        <label>KRTAP1-1</label>
    </interactant>
    <organismsDiffer>false</organismsDiffer>
    <experiments>3</experiments>
</comment>
<comment type="interaction">
    <interactant intactId="EBI-11051601">
        <id>P16144-2</id>
    </interactant>
    <interactant intactId="EBI-11749135">
        <id>Q8IUG1</id>
        <label>KRTAP1-3</label>
    </interactant>
    <organismsDiffer>false</organismsDiffer>
    <experiments>3</experiments>
</comment>
<comment type="interaction">
    <interactant intactId="EBI-11051601">
        <id>P16144-2</id>
    </interactant>
    <interactant intactId="EBI-10172290">
        <id>P60409</id>
        <label>KRTAP10-7</label>
    </interactant>
    <organismsDiffer>false</organismsDiffer>
    <experiments>3</experiments>
</comment>
<comment type="interaction">
    <interactant intactId="EBI-11051601">
        <id>P16144-2</id>
    </interactant>
    <interactant intactId="EBI-10171774">
        <id>P60410</id>
        <label>KRTAP10-8</label>
    </interactant>
    <organismsDiffer>false</organismsDiffer>
    <experiments>3</experiments>
</comment>
<comment type="interaction">
    <interactant intactId="EBI-11051601">
        <id>P16144-2</id>
    </interactant>
    <interactant intactId="EBI-10172052">
        <id>P60411</id>
        <label>KRTAP10-9</label>
    </interactant>
    <organismsDiffer>false</organismsDiffer>
    <experiments>5</experiments>
</comment>
<comment type="interaction">
    <interactant intactId="EBI-11051601">
        <id>P16144-2</id>
    </interactant>
    <interactant intactId="EBI-11953334">
        <id>P60328</id>
        <label>KRTAP12-3</label>
    </interactant>
    <organismsDiffer>false</organismsDiffer>
    <experiments>3</experiments>
</comment>
<comment type="interaction">
    <interactant intactId="EBI-11051601">
        <id>P16144-2</id>
    </interactant>
    <interactant intactId="EBI-11992140">
        <id>Q3LI76</id>
        <label>KRTAP15-1</label>
    </interactant>
    <organismsDiffer>false</organismsDiffer>
    <experiments>3</experiments>
</comment>
<comment type="interaction">
    <interactant intactId="EBI-11051601">
        <id>P16144-2</id>
    </interactant>
    <interactant intactId="EBI-11988175">
        <id>Q9BYP8</id>
        <label>KRTAP17-1</label>
    </interactant>
    <organismsDiffer>false</organismsDiffer>
    <experiments>3</experiments>
</comment>
<comment type="interaction">
    <interactant intactId="EBI-11051601">
        <id>P16144-2</id>
    </interactant>
    <interactant intactId="EBI-14065470">
        <id>Q9BYR9</id>
        <label>KRTAP2-4</label>
    </interactant>
    <organismsDiffer>false</organismsDiffer>
    <experiments>3</experiments>
</comment>
<comment type="interaction">
    <interactant intactId="EBI-11051601">
        <id>P16144-2</id>
    </interactant>
    <interactant intactId="EBI-9996449">
        <id>Q9BYR8</id>
        <label>KRTAP3-1</label>
    </interactant>
    <organismsDiffer>false</organismsDiffer>
    <experiments>3</experiments>
</comment>
<comment type="interaction">
    <interactant intactId="EBI-11051601">
        <id>P16144-2</id>
    </interactant>
    <interactant intactId="EBI-10172511">
        <id>Q9BYR5</id>
        <label>KRTAP4-2</label>
    </interactant>
    <organismsDiffer>false</organismsDiffer>
    <experiments>3</experiments>
</comment>
<comment type="interaction">
    <interactant intactId="EBI-11051601">
        <id>P16144-2</id>
    </interactant>
    <interactant intactId="EBI-11962084">
        <id>Q3LI66</id>
        <label>KRTAP6-2</label>
    </interactant>
    <organismsDiffer>false</organismsDiffer>
    <experiments>3</experiments>
</comment>
<comment type="interaction">
    <interactant intactId="EBI-11051601">
        <id>P16144-2</id>
    </interactant>
    <interactant intactId="EBI-22311199">
        <id>Q3LI67</id>
        <label>KRTAP6-3</label>
    </interactant>
    <organismsDiffer>false</organismsDiffer>
    <experiments>3</experiments>
</comment>
<comment type="interaction">
    <interactant intactId="EBI-11051601">
        <id>P16144-2</id>
    </interactant>
    <interactant intactId="EBI-1044640">
        <id>Q9BYQ4</id>
        <label>KRTAP9-2</label>
    </interactant>
    <organismsDiffer>false</organismsDiffer>
    <experiments>3</experiments>
</comment>
<comment type="interaction">
    <interactant intactId="EBI-11051601">
        <id>P16144-2</id>
    </interactant>
    <interactant intactId="EBI-1043191">
        <id>Q9BYQ3</id>
        <label>KRTAP9-3</label>
    </interactant>
    <organismsDiffer>false</organismsDiffer>
    <experiments>3</experiments>
</comment>
<comment type="interaction">
    <interactant intactId="EBI-11051601">
        <id>P16144-2</id>
    </interactant>
    <interactant intactId="EBI-724076">
        <id>Q99750</id>
        <label>MDFI</label>
    </interactant>
    <organismsDiffer>false</organismsDiffer>
    <experiments>3</experiments>
</comment>
<comment type="interaction">
    <interactant intactId="EBI-11051601">
        <id>P16144-2</id>
    </interactant>
    <interactant intactId="EBI-10172526">
        <id>Q9UJV3-2</id>
        <label>MID2</label>
    </interactant>
    <organismsDiffer>false</organismsDiffer>
    <experiments>3</experiments>
</comment>
<comment type="interaction">
    <interactant intactId="EBI-11051601">
        <id>P16144-2</id>
    </interactant>
    <interactant intactId="EBI-11522433">
        <id>Q5JR59-3</id>
        <label>MTUS2</label>
    </interactant>
    <organismsDiffer>false</organismsDiffer>
    <experiments>3</experiments>
</comment>
<comment type="interaction">
    <interactant intactId="EBI-11051601">
        <id>P16144-2</id>
    </interactant>
    <interactant intactId="EBI-17491620">
        <id>P13349</id>
        <label>MYF5</label>
    </interactant>
    <organismsDiffer>false</organismsDiffer>
    <experiments>3</experiments>
</comment>
<comment type="interaction">
    <interactant intactId="EBI-11051601">
        <id>P16144-2</id>
    </interactant>
    <interactant intactId="EBI-22310682">
        <id>P0DPK4</id>
        <label>NOTCH2NLC</label>
    </interactant>
    <organismsDiffer>false</organismsDiffer>
    <experiments>3</experiments>
</comment>
<comment type="interaction">
    <interactant intactId="EBI-11051601">
        <id>P16144-2</id>
    </interactant>
    <interactant intactId="EBI-769257">
        <id>Q9NRQ2</id>
        <label>PLSCR4</label>
    </interactant>
    <organismsDiffer>false</organismsDiffer>
    <experiments>3</experiments>
</comment>
<comment type="interaction">
    <interactant intactId="EBI-11051601">
        <id>P16144-2</id>
    </interactant>
    <interactant intactId="EBI-943588">
        <id>Q16633</id>
        <label>POU2AF1</label>
    </interactant>
    <organismsDiffer>false</organismsDiffer>
    <experiments>3</experiments>
</comment>
<comment type="interaction">
    <interactant intactId="EBI-11051601">
        <id>P16144-2</id>
    </interactant>
    <interactant intactId="EBI-2562368">
        <id>P22735</id>
        <label>TGM1</label>
    </interactant>
    <organismsDiffer>false</organismsDiffer>
    <experiments>3</experiments>
</comment>
<comment type="interaction">
    <interactant intactId="EBI-11051601">
        <id>P16144-2</id>
    </interactant>
    <interactant intactId="EBI-742327">
        <id>Q15654</id>
        <label>TRIP6</label>
    </interactant>
    <organismsDiffer>false</organismsDiffer>
    <experiments>3</experiments>
</comment>
<comment type="subcellular location">
    <subcellularLocation>
        <location>Cell membrane</location>
        <topology>Single-pass type I membrane protein</topology>
    </subcellularLocation>
    <subcellularLocation>
        <location>Cell membrane</location>
        <topology>Lipid-anchor</topology>
    </subcellularLocation>
    <subcellularLocation>
        <location>Cell junction</location>
        <location>Hemidesmosome</location>
    </subcellularLocation>
    <text>Colocalizes with DST at the leading edge of migrating keratinocytes.</text>
</comment>
<comment type="alternative products">
    <event type="alternative splicing"/>
    <isoform>
        <id>P16144-1</id>
        <name>Beta-4C</name>
        <sequence type="displayed"/>
    </isoform>
    <isoform>
        <id>P16144-2</id>
        <name>Beta-4A</name>
        <sequence type="described" ref="VSP_002749"/>
    </isoform>
    <isoform>
        <id>P16144-3</id>
        <name>Beta-4B</name>
        <sequence type="described" ref="VSP_002749 VSP_002750"/>
    </isoform>
    <isoform>
        <id>P16144-4</id>
        <name>Beta-4D</name>
        <sequence type="described" ref="VSP_002749 VSP_002751"/>
    </isoform>
    <isoform>
        <id>P16144-5</id>
        <name>Beta-4E</name>
        <sequence type="described" ref="VSP_002747 VSP_002748"/>
    </isoform>
</comment>
<comment type="tissue specificity">
    <text>Integrin alpha-6/beta-4 is predominantly expressed by epithelia. Isoform beta-4D is also expressed in colon and placenta. Isoform beta-4E is also expressed in epidermis, lung, duodenum, heart, spleen and stomach.</text>
</comment>
<comment type="domain">
    <text evidence="1">The VWFA domain (or beta I domain) contains three cation-binding sites: the ligand-associated metal ion-binding site (LIMBS or SyMBS), the metal ion-dependent adhesion site (MIDAS), and the adjacent MIDAS site (ADMIDAS). This domain is also part of the ligand-binding site.</text>
</comment>
<comment type="domain">
    <text>The fibronectin type-III-like domains bind BPAG1 and plectin and probably also recruit BP230.</text>
</comment>
<comment type="PTM">
    <text evidence="17 21">Palmitoylated by DHHC3 at several cysteines of the membrane-proximal region, enhancing stability and cell surface expression. Palmitoylation also promotes secondary association with tertaspanins.</text>
</comment>
<comment type="disease" evidence="8 15">
    <disease id="DI-06342">
        <name>Epidermolysis bullosa, junctional 5A, intermediate</name>
        <acronym>JEB5A</acronym>
        <description>A form of epidermolysis bullosa, a genodermatosis characterized by recurrent blistering, fragility of the skin and mucosal epithelia, and erosions caused by minor mechanical trauma. JEB5A is an autosomal recessive, intermediate form in which blistering lesions occur between the epidermis and the dermis at the lamina lucida level of the basement membrane zone. In intermediate forms of junctional epidermolysis bullosa, blistering does not lead to the formation of chronic granulation tissue and does not affect the lifespan of affected individuals. Nail dystrophy and dental enamel defects are present. Scarring or non-scarring alopecia and diffuse hair loss may occur.</description>
        <dbReference type="MIM" id="619816"/>
    </disease>
    <text>The disease is caused by variants affecting the gene represented in this entry.</text>
</comment>
<comment type="disease" evidence="9 10 12 31 32 33 34">
    <disease id="DI-00458">
        <name>Epidermolysis bullosa, junctional 5B, with pyloric atresia</name>
        <acronym>JEB5B</acronym>
        <description>A form of epidermolysis bullosa, a genodermatosis characterized by recurrent blistering, fragility of the skin and mucosal epithelia, and erosions caused by minor mechanical trauma. Junctional epidermolysis bullosa is characterized by blistering that occurs at the level of the lamina lucida in the skin basement membrane. JEB5B is an autosomal recessive, severe, frequently lethal form with variable involvement of skin, nails, mucosa, and with variable effects on the digestive system. It is characterized by mucocutaneous fragility, aplasia cutis congenita, and gastrointestinal atresia, which most commonly affects the pylorus. Pyloric atresia is a primary manifestation rather than a scarring process secondary to epidermolysis bullosa.</description>
        <dbReference type="MIM" id="226730"/>
    </disease>
    <text>The disease is caused by variants affecting the gene represented in this entry.</text>
</comment>
<comment type="similarity">
    <text evidence="40">Belongs to the integrin beta chain family.</text>
</comment>
<comment type="sequence caution" evidence="40">
    <conflict type="frameshift">
        <sequence resource="EMBL-CDS" id="CAA37656"/>
    </conflict>
</comment>
<accession>P16144</accession>
<accession>A0AVL6</accession>
<accession>O14690</accession>
<accession>O14691</accession>
<accession>O15339</accession>
<accession>O15340</accession>
<accession>O15341</accession>
<accession>Q0VF97</accession>
<accession>Q9UIQ4</accession>
<feature type="signal peptide" evidence="25">
    <location>
        <begin position="1"/>
        <end position="27"/>
    </location>
</feature>
<feature type="chain" id="PRO_0000016346" description="Integrin beta-4">
    <location>
        <begin position="28"/>
        <end position="1822"/>
    </location>
</feature>
<feature type="topological domain" description="Extracellular" evidence="3">
    <location>
        <begin position="28"/>
        <end position="710"/>
    </location>
</feature>
<feature type="transmembrane region" description="Helical" evidence="3">
    <location>
        <begin position="711"/>
        <end position="733"/>
    </location>
</feature>
<feature type="topological domain" description="Cytoplasmic" evidence="3">
    <location>
        <begin position="734"/>
        <end position="1822"/>
    </location>
</feature>
<feature type="domain" description="PSI" evidence="3">
    <location>
        <begin position="29"/>
        <end position="73"/>
    </location>
</feature>
<feature type="domain" description="VWFA" evidence="1">
    <location>
        <begin position="131"/>
        <end position="329"/>
    </location>
</feature>
<feature type="domain" description="I-EGF 1" evidence="5">
    <location>
        <begin position="457"/>
        <end position="491"/>
    </location>
</feature>
<feature type="domain" description="I-EGF 2" evidence="5">
    <location>
        <begin position="492"/>
        <end position="537"/>
    </location>
</feature>
<feature type="domain" description="I-EGF 3" evidence="5">
    <location>
        <begin position="538"/>
        <end position="574"/>
    </location>
</feature>
<feature type="domain" description="I-EGF 4" evidence="5">
    <location>
        <begin position="575"/>
        <end position="615"/>
    </location>
</feature>
<feature type="domain" description="Calx-beta">
    <location>
        <begin position="979"/>
        <end position="1084"/>
    </location>
</feature>
<feature type="domain" description="Fibronectin type-III 1" evidence="4">
    <location>
        <begin position="1129"/>
        <end position="1218"/>
    </location>
</feature>
<feature type="domain" description="Fibronectin type-III 2" evidence="4">
    <location>
        <begin position="1222"/>
        <end position="1321"/>
    </location>
</feature>
<feature type="domain" description="Fibronectin type-III 3" evidence="4">
    <location>
        <begin position="1530"/>
        <end position="1625"/>
    </location>
</feature>
<feature type="domain" description="Fibronectin type-III 4" evidence="4">
    <location>
        <begin position="1643"/>
        <end position="1739"/>
    </location>
</feature>
<feature type="region of interest" description="Involved in NRG1- and IGF1-binding" evidence="20 22">
    <location>
        <begin position="194"/>
        <end position="199"/>
    </location>
</feature>
<feature type="region of interest" description="Palmitoylated on several cysteines">
    <location>
        <begin position="732"/>
        <end position="749"/>
    </location>
</feature>
<feature type="region of interest" description="Disordered" evidence="6">
    <location>
        <begin position="1113"/>
        <end position="1140"/>
    </location>
</feature>
<feature type="region of interest" description="Disordered" evidence="6">
    <location>
        <begin position="1400"/>
        <end position="1444"/>
    </location>
</feature>
<feature type="region of interest" description="Disordered" evidence="6">
    <location>
        <begin position="1495"/>
        <end position="1525"/>
    </location>
</feature>
<feature type="compositionally biased region" description="Gly residues" evidence="6">
    <location>
        <begin position="1418"/>
        <end position="1427"/>
    </location>
</feature>
<feature type="compositionally biased region" description="Polar residues" evidence="6">
    <location>
        <begin position="1503"/>
        <end position="1518"/>
    </location>
</feature>
<feature type="binding site" description="in MIDAS binding site" evidence="1">
    <location>
        <position position="139"/>
    </location>
    <ligand>
        <name>Mg(2+)</name>
        <dbReference type="ChEBI" id="CHEBI:18420"/>
    </ligand>
</feature>
<feature type="binding site" description="in ADMIDAS binding site" evidence="1">
    <location>
        <position position="141"/>
    </location>
    <ligand>
        <name>Ca(2+)</name>
        <dbReference type="ChEBI" id="CHEBI:29108"/>
        <label>1</label>
    </ligand>
</feature>
<feature type="binding site" description="in MIDAS binding site" evidence="1">
    <location>
        <position position="141"/>
    </location>
    <ligand>
        <name>Mg(2+)</name>
        <dbReference type="ChEBI" id="CHEBI:18420"/>
    </ligand>
</feature>
<feature type="binding site" description="in ADMIDAS binding site" evidence="1">
    <location>
        <position position="144"/>
    </location>
    <ligand>
        <name>Ca(2+)</name>
        <dbReference type="ChEBI" id="CHEBI:29108"/>
        <label>1</label>
    </ligand>
</feature>
<feature type="binding site" description="in ADMIDAS binding site" evidence="1">
    <location>
        <position position="145"/>
    </location>
    <ligand>
        <name>Ca(2+)</name>
        <dbReference type="ChEBI" id="CHEBI:29108"/>
        <label>1</label>
    </ligand>
</feature>
<feature type="binding site" description="in LIMBS binding site" evidence="1">
    <location>
        <position position="176"/>
    </location>
    <ligand>
        <name>Ca(2+)</name>
        <dbReference type="ChEBI" id="CHEBI:29108"/>
        <label>2</label>
    </ligand>
</feature>
<feature type="binding site" description="in LIMBS binding site" evidence="1">
    <location>
        <position position="228"/>
    </location>
    <ligand>
        <name>Ca(2+)</name>
        <dbReference type="ChEBI" id="CHEBI:29108"/>
        <label>2</label>
    </ligand>
</feature>
<feature type="binding site" description="in LIMBS binding site" evidence="1">
    <location>
        <position position="230"/>
    </location>
    <ligand>
        <name>Ca(2+)</name>
        <dbReference type="ChEBI" id="CHEBI:29108"/>
        <label>2</label>
    </ligand>
</feature>
<feature type="binding site" description="in LIMBS binding site" evidence="1">
    <location>
        <position position="232"/>
    </location>
    <ligand>
        <name>Ca(2+)</name>
        <dbReference type="ChEBI" id="CHEBI:29108"/>
        <label>2</label>
    </ligand>
</feature>
<feature type="binding site" description="in LIMBS binding site" evidence="1">
    <location>
        <position position="233"/>
    </location>
    <ligand>
        <name>Ca(2+)</name>
        <dbReference type="ChEBI" id="CHEBI:29108"/>
        <label>2</label>
    </ligand>
</feature>
<feature type="binding site" description="in MIDAS binding site" evidence="1">
    <location>
        <position position="233"/>
    </location>
    <ligand>
        <name>Mg(2+)</name>
        <dbReference type="ChEBI" id="CHEBI:18420"/>
    </ligand>
</feature>
<feature type="binding site" description="in ADMIDAS binding site" evidence="1">
    <location>
        <position position="350"/>
    </location>
    <ligand>
        <name>Ca(2+)</name>
        <dbReference type="ChEBI" id="CHEBI:29108"/>
        <label>1</label>
    </ligand>
</feature>
<feature type="modified residue" description="Phosphoserine" evidence="2">
    <location>
        <position position="771"/>
    </location>
</feature>
<feature type="modified residue" description="Phosphoserine" evidence="42">
    <location>
        <position position="1069"/>
    </location>
</feature>
<feature type="modified residue" description="Phosphoserine" evidence="2">
    <location>
        <position position="1119"/>
    </location>
</feature>
<feature type="modified residue" description="Phosphoserine" evidence="42">
    <location>
        <position position="1454"/>
    </location>
</feature>
<feature type="modified residue" description="Phosphoserine" evidence="42">
    <location>
        <position position="1457"/>
    </location>
</feature>
<feature type="modified residue" description="Phosphoserine" evidence="42">
    <location>
        <position position="1474"/>
    </location>
</feature>
<feature type="modified residue" description="Phosphothreonine" evidence="42">
    <location>
        <position position="1487"/>
    </location>
</feature>
<feature type="modified residue" description="Phosphoserine" evidence="2">
    <location>
        <position position="1494"/>
    </location>
</feature>
<feature type="modified residue" description="Phosphothreonine" evidence="41 42">
    <location>
        <position position="1530"/>
    </location>
</feature>
<feature type="modified residue" description="Phosphoserine" evidence="2">
    <location>
        <position position="1791"/>
    </location>
</feature>
<feature type="glycosylation site" description="N-linked (GlcNAc...) asparagine" evidence="3">
    <location>
        <position position="327"/>
    </location>
</feature>
<feature type="glycosylation site" description="N-linked (GlcNAc...) asparagine" evidence="3">
    <location>
        <position position="491"/>
    </location>
</feature>
<feature type="glycosylation site" description="N-linked (GlcNAc...) asparagine" evidence="3">
    <location>
        <position position="579"/>
    </location>
</feature>
<feature type="glycosylation site" description="N-linked (GlcNAc...) asparagine" evidence="3">
    <location>
        <position position="617"/>
    </location>
</feature>
<feature type="glycosylation site" description="N-linked (GlcNAc...) asparagine" evidence="18">
    <location>
        <position position="695"/>
    </location>
</feature>
<feature type="disulfide bond" evidence="1">
    <location>
        <begin position="30"/>
        <end position="48"/>
    </location>
</feature>
<feature type="disulfide bond" evidence="1">
    <location>
        <begin position="38"/>
        <end position="455"/>
    </location>
</feature>
<feature type="disulfide bond" evidence="1">
    <location>
        <begin position="41"/>
        <end position="61"/>
    </location>
</feature>
<feature type="disulfide bond" evidence="1">
    <location>
        <begin position="51"/>
        <end position="72"/>
    </location>
</feature>
<feature type="disulfide bond" evidence="1">
    <location>
        <begin position="245"/>
        <end position="288"/>
    </location>
</feature>
<feature type="disulfide bond" evidence="5">
    <location>
        <begin position="457"/>
        <end position="476"/>
    </location>
</feature>
<feature type="disulfide bond" evidence="5">
    <location>
        <begin position="468"/>
        <end position="479"/>
    </location>
</feature>
<feature type="disulfide bond" evidence="5">
    <location>
        <begin position="481"/>
        <end position="490"/>
    </location>
</feature>
<feature type="disulfide bond" evidence="5">
    <location>
        <begin position="492"/>
        <end position="520"/>
    </location>
</feature>
<feature type="disulfide bond" evidence="5">
    <location>
        <begin position="503"/>
        <end position="518"/>
    </location>
</feature>
<feature type="disulfide bond" evidence="5">
    <location>
        <begin position="512"/>
        <end position="523"/>
    </location>
</feature>
<feature type="disulfide bond" evidence="5">
    <location>
        <begin position="525"/>
        <end position="536"/>
    </location>
</feature>
<feature type="disulfide bond" evidence="5">
    <location>
        <begin position="543"/>
        <end position="557"/>
    </location>
</feature>
<feature type="disulfide bond" evidence="5">
    <location>
        <begin position="551"/>
        <end position="562"/>
    </location>
</feature>
<feature type="disulfide bond" evidence="5">
    <location>
        <begin position="564"/>
        <end position="573"/>
    </location>
</feature>
<feature type="disulfide bond" evidence="5">
    <location>
        <begin position="575"/>
        <end position="598"/>
    </location>
</feature>
<feature type="disulfide bond" evidence="5">
    <location>
        <begin position="582"/>
        <end position="596"/>
    </location>
</feature>
<feature type="disulfide bond" evidence="5">
    <location>
        <begin position="590"/>
        <end position="601"/>
    </location>
</feature>
<feature type="disulfide bond" evidence="5">
    <location>
        <begin position="603"/>
        <end position="614"/>
    </location>
</feature>
<feature type="disulfide bond" evidence="1">
    <location>
        <begin position="626"/>
        <end position="671"/>
    </location>
</feature>
<feature type="disulfide bond" evidence="1">
    <location>
        <begin position="632"/>
        <end position="651"/>
    </location>
</feature>
<feature type="disulfide bond" evidence="1">
    <location>
        <begin position="635"/>
        <end position="648"/>
    </location>
</feature>
<feature type="disulfide bond" evidence="1">
    <location>
        <begin position="680"/>
        <end position="706"/>
    </location>
</feature>
<feature type="splice variant" id="VSP_002747" description="In isoform Beta-4E." evidence="39">
    <original>LNEVYRQISGVHKLQQTKFRQQPNAGKKQDHTIVDTVLMAPRSAKPALLKLTEKQVEQRAFHDLKVAPGYYTLTADQDARGMVEFQEGVELVDVRVPLFIRPEDDDEKQLLVEA</original>
    <variation>VRTQELGLAGDVAERGLQADLRCTQAPADQVPAAAQCREKARPHHCGHSADGAPLGQAGPAEAYREAGGTEGLPRPQGGPRLLHPHCRPGRPGHGGVPGGRGAGGRTGAPLYPA</variation>
    <location>
        <begin position="851"/>
        <end position="964"/>
    </location>
</feature>
<feature type="splice variant" id="VSP_002748" description="In isoform Beta-4E." evidence="39">
    <location>
        <begin position="965"/>
        <end position="1822"/>
    </location>
</feature>
<feature type="splice variant" id="VSP_002749" description="In isoform Beta-4A, isoform Beta-4B and isoform Beta-4D." evidence="35 36 37 38">
    <location>
        <begin position="1370"/>
        <end position="1439"/>
    </location>
</feature>
<feature type="splice variant" id="VSP_002750" description="In isoform Beta-4B." evidence="37 38">
    <original>H</original>
    <variation>HGLPPIWEHGRSRLPLSWALGSRSRAQMKGFPPSRGPRDSIILAGRPAAPSWGP</variation>
    <location>
        <position position="1519"/>
    </location>
</feature>
<feature type="splice variant" id="VSP_002751" description="In isoform Beta-4D." evidence="40">
    <original>CEMAQGGG</original>
    <variation>W</variation>
    <location>
        <begin position="1678"/>
        <end position="1685"/>
    </location>
</feature>
<feature type="sequence variant" id="VAR_010652" description="In JEB5B; dbSNP:rs121912465." evidence="34">
    <original>C</original>
    <variation>R</variation>
    <location>
        <position position="38"/>
    </location>
</feature>
<feature type="sequence variant" id="VAR_004006" description="In JEB5B; dbSNP:rs80338755." evidence="33">
    <original>C</original>
    <variation>Y</variation>
    <location>
        <position position="61"/>
    </location>
</feature>
<feature type="sequence variant" id="VAR_011292" description="In dbSNP:rs143114124." evidence="11">
    <original>R</original>
    <variation>H</variation>
    <location>
        <position position="98"/>
    </location>
</feature>
<feature type="sequence variant" id="VAR_011293" description="In JEB5B." evidence="12">
    <original>D</original>
    <variation>Y</variation>
    <location>
        <position position="131"/>
    </location>
</feature>
<feature type="sequence variant" id="VAR_004007" description="In JEB5B; dbSNP:rs121912461." evidence="32">
    <original>L</original>
    <variation>P</variation>
    <location>
        <position position="156"/>
    </location>
</feature>
<feature type="sequence variant" id="VAR_004008" description="In JEB5B." evidence="31">
    <original>C</original>
    <variation>G</variation>
    <location>
        <position position="245"/>
    </location>
</feature>
<feature type="sequence variant" id="VAR_004009" description="In JEB5B; dbSNP:rs201494421." evidence="12 33">
    <original>R</original>
    <variation>C</variation>
    <location>
        <position position="252"/>
    </location>
</feature>
<feature type="sequence variant" id="VAR_011294" description="In JEB5B; dbSNP:rs1476568580." evidence="12">
    <original>G</original>
    <variation>D</variation>
    <location>
        <position position="273"/>
    </location>
</feature>
<feature type="sequence variant" id="VAR_011295" description="In JEB5B; dbSNP:rs1422797135." evidence="12">
    <original>R</original>
    <variation>C</variation>
    <location>
        <position position="283"/>
    </location>
</feature>
<feature type="sequence variant" id="VAR_011296" description="In JEB5B; dbSNP:rs1304888529." evidence="12">
    <original>V</original>
    <variation>D</variation>
    <location>
        <position position="325"/>
    </location>
</feature>
<feature type="sequence variant" id="VAR_011297" description="In JEB5B." evidence="12">
    <original>L</original>
    <variation>P</variation>
    <location>
        <position position="336"/>
    </location>
</feature>
<feature type="sequence variant" id="VAR_027803" description="In dbSNP:rs8079267.">
    <original>Q</original>
    <variation>H</variation>
    <location>
        <position position="478"/>
    </location>
</feature>
<feature type="sequence variant" id="VAR_004010" description="In JEB5B; dbSNP:rs121912463." evidence="33">
    <original>C</original>
    <variation>R</variation>
    <location>
        <position position="562"/>
    </location>
</feature>
<feature type="sequence variant" id="VAR_011298" description="In dbSNP:rs140819116." evidence="11">
    <original>R</original>
    <variation>L</variation>
    <location>
        <position position="844"/>
    </location>
</feature>
<feature type="sequence variant" id="VAR_011299" description="In JEB5A; dbSNP:rs121912466." evidence="8">
    <original>G</original>
    <variation>D</variation>
    <location>
        <position position="931"/>
    </location>
</feature>
<feature type="sequence variant" id="VAR_011300" description="In dbSNP:rs149284152." evidence="12">
    <original>H</original>
    <variation>Q</variation>
    <location>
        <position position="1216"/>
    </location>
</feature>
<feature type="sequence variant" id="VAR_011301" description="In JEB5B; dbSNP:rs121912468." evidence="12">
    <original>R</original>
    <variation>H</variation>
    <location>
        <position position="1225"/>
    </location>
</feature>
<feature type="sequence variant" id="VAR_004011" description="In JEB5B; abolishes interaction with PLEC and reduces interaction with COL17A1; dbSNP:rs121912467." evidence="9 14 33">
    <original>R</original>
    <variation>W</variation>
    <location>
        <position position="1281"/>
    </location>
</feature>
<feature type="sequence variant" id="VAR_055971" description="In dbSNP:rs1051486." evidence="28 29">
    <original>T</original>
    <variation>S</variation>
    <location>
        <position position="1764"/>
    </location>
</feature>
<feature type="sequence variant" id="VAR_027804" description="In dbSNP:rs871443." evidence="16 23 24 28 29 30">
    <original>L</original>
    <variation>P</variation>
    <location>
        <position position="1779"/>
    </location>
</feature>
<feature type="sequence conflict" description="In Ref. 5; CAB61345." evidence="40" ref="5">
    <location>
        <position position="27"/>
    </location>
</feature>
<feature type="sequence conflict" description="In Ref. 11; AA sequence." evidence="40" ref="11">
    <original>R</original>
    <variation>Y</variation>
    <location>
        <position position="43"/>
    </location>
</feature>
<feature type="sequence conflict" description="In Ref. 11; AA sequence." evidence="40" ref="11">
    <original>K</original>
    <variation>P</variation>
    <location>
        <position position="46"/>
    </location>
</feature>
<feature type="sequence conflict" description="In Ref. 5; CAB61345." evidence="40" ref="5">
    <original>IHPGLCEDLRSCVQCQAWGTGEKKGRTCEECNFKVKMVDELKRAEEVVVRCSFRDEDDDCTYSYTMEGDGAPGPNSTVLVHKKK</original>
    <variation>STRASARTYAPACSARRGAPARRRGARVRNATSRSRWWTSLREARRWWCAAPSGTRMTTAPTATPWKVTAPLGPTALSWCTRRR</variation>
    <location>
        <begin position="621"/>
        <end position="704"/>
    </location>
</feature>
<feature type="sequence conflict" description="In Ref. 8; AAB65422." evidence="40" ref="8">
    <original>GFA</original>
    <variation>WLC</variation>
    <location>
        <begin position="802"/>
        <end position="804"/>
    </location>
</feature>
<feature type="sequence conflict" description="In Ref. 3; CAA37656." evidence="40" ref="3">
    <original>HGPPDDGGAGGKGGSL</original>
    <variation>TAPRTTAARAGRAAAV</variation>
    <location>
        <begin position="1414"/>
        <end position="1429"/>
    </location>
</feature>
<feature type="sequence conflict" description="In Ref. 10; AAI18917." evidence="40" ref="10">
    <original>P</original>
    <variation>L</variation>
    <location>
        <position position="1755"/>
    </location>
</feature>
<feature type="sequence conflict" description="In Ref. 5; CAB61345." evidence="40" ref="5">
    <location>
        <position position="1777"/>
    </location>
</feature>
<feature type="strand" evidence="49">
    <location>
        <begin position="990"/>
        <end position="995"/>
    </location>
</feature>
<feature type="strand" evidence="49">
    <location>
        <begin position="997"/>
        <end position="1002"/>
    </location>
</feature>
<feature type="helix" evidence="49">
    <location>
        <begin position="1003"/>
        <end position="1005"/>
    </location>
</feature>
<feature type="strand" evidence="49">
    <location>
        <begin position="1006"/>
        <end position="1016"/>
    </location>
</feature>
<feature type="strand" evidence="49">
    <location>
        <begin position="1022"/>
        <end position="1033"/>
    </location>
</feature>
<feature type="turn" evidence="49">
    <location>
        <begin position="1035"/>
        <end position="1037"/>
    </location>
</feature>
<feature type="strand" evidence="49">
    <location>
        <begin position="1043"/>
        <end position="1048"/>
    </location>
</feature>
<feature type="strand" evidence="49">
    <location>
        <begin position="1054"/>
        <end position="1061"/>
    </location>
</feature>
<feature type="turn" evidence="48">
    <location>
        <begin position="1070"/>
        <end position="1073"/>
    </location>
</feature>
<feature type="strand" evidence="49">
    <location>
        <begin position="1076"/>
        <end position="1087"/>
    </location>
</feature>
<feature type="strand" evidence="49">
    <location>
        <begin position="1096"/>
        <end position="1103"/>
    </location>
</feature>
<feature type="strand" evidence="46">
    <location>
        <begin position="1131"/>
        <end position="1137"/>
    </location>
</feature>
<feature type="strand" evidence="46">
    <location>
        <begin position="1139"/>
        <end position="1141"/>
    </location>
</feature>
<feature type="strand" evidence="46">
    <location>
        <begin position="1143"/>
        <end position="1148"/>
    </location>
</feature>
<feature type="strand" evidence="46">
    <location>
        <begin position="1156"/>
        <end position="1163"/>
    </location>
</feature>
<feature type="helix" evidence="46">
    <location>
        <begin position="1168"/>
        <end position="1170"/>
    </location>
</feature>
<feature type="strand" evidence="46">
    <location>
        <begin position="1172"/>
        <end position="1183"/>
    </location>
</feature>
<feature type="strand" evidence="46">
    <location>
        <begin position="1191"/>
        <end position="1200"/>
    </location>
</feature>
<feature type="strand" evidence="45">
    <location>
        <begin position="1203"/>
        <end position="1207"/>
    </location>
</feature>
<feature type="strand" evidence="46">
    <location>
        <begin position="1211"/>
        <end position="1214"/>
    </location>
</feature>
<feature type="strand" evidence="46">
    <location>
        <begin position="1227"/>
        <end position="1230"/>
    </location>
</feature>
<feature type="strand" evidence="46">
    <location>
        <begin position="1232"/>
        <end position="1234"/>
    </location>
</feature>
<feature type="strand" evidence="46">
    <location>
        <begin position="1236"/>
        <end position="1239"/>
    </location>
</feature>
<feature type="strand" evidence="46">
    <location>
        <begin position="1252"/>
        <end position="1260"/>
    </location>
</feature>
<feature type="strand" evidence="47">
    <location>
        <begin position="1262"/>
        <end position="1264"/>
    </location>
</feature>
<feature type="strand" evidence="46">
    <location>
        <begin position="1266"/>
        <end position="1268"/>
    </location>
</feature>
<feature type="strand" evidence="43">
    <location>
        <begin position="1271"/>
        <end position="1275"/>
    </location>
</feature>
<feature type="strand" evidence="46">
    <location>
        <begin position="1282"/>
        <end position="1286"/>
    </location>
</feature>
<feature type="strand" evidence="46">
    <location>
        <begin position="1294"/>
        <end position="1302"/>
    </location>
</feature>
<feature type="strand" evidence="46">
    <location>
        <begin position="1310"/>
        <end position="1314"/>
    </location>
</feature>
<feature type="helix" evidence="46">
    <location>
        <begin position="1316"/>
        <end position="1318"/>
    </location>
</feature>
<feature type="strand" evidence="46">
    <location>
        <begin position="1334"/>
        <end position="1336"/>
    </location>
</feature>
<feature type="strand" evidence="45">
    <location>
        <begin position="1344"/>
        <end position="1348"/>
    </location>
</feature>
<feature type="strand" evidence="44">
    <location>
        <begin position="1522"/>
        <end position="1524"/>
    </location>
</feature>
<feature type="strand" evidence="51">
    <location>
        <begin position="1532"/>
        <end position="1540"/>
    </location>
</feature>
<feature type="strand" evidence="51">
    <location>
        <begin position="1543"/>
        <end position="1549"/>
    </location>
</feature>
<feature type="strand" evidence="51">
    <location>
        <begin position="1558"/>
        <end position="1566"/>
    </location>
</feature>
<feature type="turn" evidence="51">
    <location>
        <begin position="1567"/>
        <end position="1569"/>
    </location>
</feature>
<feature type="strand" evidence="51">
    <location>
        <begin position="1573"/>
        <end position="1577"/>
    </location>
</feature>
<feature type="strand" evidence="51">
    <location>
        <begin position="1584"/>
        <end position="1587"/>
    </location>
</feature>
<feature type="strand" evidence="51">
    <location>
        <begin position="1595"/>
        <end position="1604"/>
    </location>
</feature>
<feature type="strand" evidence="51">
    <location>
        <begin position="1612"/>
        <end position="1620"/>
    </location>
</feature>
<feature type="turn" evidence="51">
    <location>
        <begin position="1632"/>
        <end position="1635"/>
    </location>
</feature>
<feature type="strand" evidence="51">
    <location>
        <begin position="1636"/>
        <end position="1639"/>
    </location>
</feature>
<feature type="strand" evidence="50">
    <location>
        <begin position="1648"/>
        <end position="1653"/>
    </location>
</feature>
<feature type="strand" evidence="50">
    <location>
        <begin position="1656"/>
        <end position="1662"/>
    </location>
</feature>
<feature type="strand" evidence="50">
    <location>
        <begin position="1671"/>
        <end position="1680"/>
    </location>
</feature>
<feature type="strand" evidence="50">
    <location>
        <begin position="1683"/>
        <end position="1685"/>
    </location>
</feature>
<feature type="strand" evidence="50">
    <location>
        <begin position="1688"/>
        <end position="1694"/>
    </location>
</feature>
<feature type="strand" evidence="50">
    <location>
        <begin position="1697"/>
        <end position="1703"/>
    </location>
</feature>
<feature type="strand" evidence="50">
    <location>
        <begin position="1712"/>
        <end position="1722"/>
    </location>
</feature>
<feature type="strand" evidence="50">
    <location>
        <begin position="1724"/>
        <end position="1732"/>
    </location>
</feature>
<dbReference type="EMBL" id="X51841">
    <property type="protein sequence ID" value="CAA36134.1"/>
    <property type="molecule type" value="mRNA"/>
</dbReference>
<dbReference type="EMBL" id="X52186">
    <property type="protein sequence ID" value="CAA36433.1"/>
    <property type="molecule type" value="mRNA"/>
</dbReference>
<dbReference type="EMBL" id="X53587">
    <property type="protein sequence ID" value="CAA37656.1"/>
    <property type="status" value="ALT_FRAME"/>
    <property type="molecule type" value="mRNA"/>
</dbReference>
<dbReference type="EMBL" id="U66541">
    <property type="protein sequence ID" value="AAC51634.1"/>
    <property type="molecule type" value="Genomic_DNA"/>
</dbReference>
<dbReference type="EMBL" id="U66530">
    <property type="protein sequence ID" value="AAC51634.1"/>
    <property type="status" value="JOINED"/>
    <property type="molecule type" value="Genomic_DNA"/>
</dbReference>
<dbReference type="EMBL" id="U66531">
    <property type="protein sequence ID" value="AAC51634.1"/>
    <property type="status" value="JOINED"/>
    <property type="molecule type" value="Genomic_DNA"/>
</dbReference>
<dbReference type="EMBL" id="U66532">
    <property type="protein sequence ID" value="AAC51634.1"/>
    <property type="status" value="JOINED"/>
    <property type="molecule type" value="Genomic_DNA"/>
</dbReference>
<dbReference type="EMBL" id="U66533">
    <property type="protein sequence ID" value="AAC51634.1"/>
    <property type="status" value="JOINED"/>
    <property type="molecule type" value="Genomic_DNA"/>
</dbReference>
<dbReference type="EMBL" id="U66534">
    <property type="protein sequence ID" value="AAC51634.1"/>
    <property type="status" value="JOINED"/>
    <property type="molecule type" value="Genomic_DNA"/>
</dbReference>
<dbReference type="EMBL" id="U66535">
    <property type="protein sequence ID" value="AAC51634.1"/>
    <property type="status" value="JOINED"/>
    <property type="molecule type" value="Genomic_DNA"/>
</dbReference>
<dbReference type="EMBL" id="U66536">
    <property type="protein sequence ID" value="AAC51634.1"/>
    <property type="status" value="JOINED"/>
    <property type="molecule type" value="Genomic_DNA"/>
</dbReference>
<dbReference type="EMBL" id="U66537">
    <property type="protein sequence ID" value="AAC51634.1"/>
    <property type="status" value="JOINED"/>
    <property type="molecule type" value="Genomic_DNA"/>
</dbReference>
<dbReference type="EMBL" id="U66538">
    <property type="protein sequence ID" value="AAC51634.1"/>
    <property type="status" value="JOINED"/>
    <property type="molecule type" value="Genomic_DNA"/>
</dbReference>
<dbReference type="EMBL" id="U66539">
    <property type="protein sequence ID" value="AAC51634.1"/>
    <property type="status" value="JOINED"/>
    <property type="molecule type" value="Genomic_DNA"/>
</dbReference>
<dbReference type="EMBL" id="U66540">
    <property type="protein sequence ID" value="AAC51634.1"/>
    <property type="status" value="JOINED"/>
    <property type="molecule type" value="Genomic_DNA"/>
</dbReference>
<dbReference type="EMBL" id="U66541">
    <property type="protein sequence ID" value="AAC51633.1"/>
    <property type="molecule type" value="Genomic_DNA"/>
</dbReference>
<dbReference type="EMBL" id="U66530">
    <property type="protein sequence ID" value="AAC51633.1"/>
    <property type="status" value="JOINED"/>
    <property type="molecule type" value="Genomic_DNA"/>
</dbReference>
<dbReference type="EMBL" id="U66531">
    <property type="protein sequence ID" value="AAC51633.1"/>
    <property type="status" value="JOINED"/>
    <property type="molecule type" value="Genomic_DNA"/>
</dbReference>
<dbReference type="EMBL" id="U66532">
    <property type="protein sequence ID" value="AAC51633.1"/>
    <property type="status" value="JOINED"/>
    <property type="molecule type" value="Genomic_DNA"/>
</dbReference>
<dbReference type="EMBL" id="U66533">
    <property type="protein sequence ID" value="AAC51633.1"/>
    <property type="status" value="JOINED"/>
    <property type="molecule type" value="Genomic_DNA"/>
</dbReference>
<dbReference type="EMBL" id="U66534">
    <property type="protein sequence ID" value="AAC51633.1"/>
    <property type="status" value="JOINED"/>
    <property type="molecule type" value="Genomic_DNA"/>
</dbReference>
<dbReference type="EMBL" id="U66535">
    <property type="protein sequence ID" value="AAC51633.1"/>
    <property type="status" value="JOINED"/>
    <property type="molecule type" value="Genomic_DNA"/>
</dbReference>
<dbReference type="EMBL" id="U66536">
    <property type="protein sequence ID" value="AAC51633.1"/>
    <property type="status" value="JOINED"/>
    <property type="molecule type" value="Genomic_DNA"/>
</dbReference>
<dbReference type="EMBL" id="U66537">
    <property type="protein sequence ID" value="AAC51633.1"/>
    <property type="status" value="JOINED"/>
    <property type="molecule type" value="Genomic_DNA"/>
</dbReference>
<dbReference type="EMBL" id="U66538">
    <property type="protein sequence ID" value="AAC51633.1"/>
    <property type="status" value="JOINED"/>
    <property type="molecule type" value="Genomic_DNA"/>
</dbReference>
<dbReference type="EMBL" id="U66539">
    <property type="protein sequence ID" value="AAC51633.1"/>
    <property type="status" value="JOINED"/>
    <property type="molecule type" value="Genomic_DNA"/>
</dbReference>
<dbReference type="EMBL" id="U66540">
    <property type="protein sequence ID" value="AAC51633.1"/>
    <property type="status" value="JOINED"/>
    <property type="molecule type" value="Genomic_DNA"/>
</dbReference>
<dbReference type="EMBL" id="U66541">
    <property type="protein sequence ID" value="AAC51632.1"/>
    <property type="molecule type" value="Genomic_DNA"/>
</dbReference>
<dbReference type="EMBL" id="U66530">
    <property type="protein sequence ID" value="AAC51632.1"/>
    <property type="status" value="JOINED"/>
    <property type="molecule type" value="Genomic_DNA"/>
</dbReference>
<dbReference type="EMBL" id="U66531">
    <property type="protein sequence ID" value="AAC51632.1"/>
    <property type="status" value="JOINED"/>
    <property type="molecule type" value="Genomic_DNA"/>
</dbReference>
<dbReference type="EMBL" id="U66532">
    <property type="protein sequence ID" value="AAC51632.1"/>
    <property type="status" value="JOINED"/>
    <property type="molecule type" value="Genomic_DNA"/>
</dbReference>
<dbReference type="EMBL" id="U66533">
    <property type="protein sequence ID" value="AAC51632.1"/>
    <property type="status" value="JOINED"/>
    <property type="molecule type" value="Genomic_DNA"/>
</dbReference>
<dbReference type="EMBL" id="U66534">
    <property type="protein sequence ID" value="AAC51632.1"/>
    <property type="status" value="JOINED"/>
    <property type="molecule type" value="Genomic_DNA"/>
</dbReference>
<dbReference type="EMBL" id="U66535">
    <property type="protein sequence ID" value="AAC51632.1"/>
    <property type="status" value="JOINED"/>
    <property type="molecule type" value="Genomic_DNA"/>
</dbReference>
<dbReference type="EMBL" id="U66536">
    <property type="protein sequence ID" value="AAC51632.1"/>
    <property type="status" value="JOINED"/>
    <property type="molecule type" value="Genomic_DNA"/>
</dbReference>
<dbReference type="EMBL" id="U66537">
    <property type="protein sequence ID" value="AAC51632.1"/>
    <property type="status" value="JOINED"/>
    <property type="molecule type" value="Genomic_DNA"/>
</dbReference>
<dbReference type="EMBL" id="U66538">
    <property type="protein sequence ID" value="AAC51632.1"/>
    <property type="status" value="JOINED"/>
    <property type="molecule type" value="Genomic_DNA"/>
</dbReference>
<dbReference type="EMBL" id="U66539">
    <property type="protein sequence ID" value="AAC51632.1"/>
    <property type="status" value="JOINED"/>
    <property type="molecule type" value="Genomic_DNA"/>
</dbReference>
<dbReference type="EMBL" id="U66540">
    <property type="protein sequence ID" value="AAC51632.1"/>
    <property type="status" value="JOINED"/>
    <property type="molecule type" value="Genomic_DNA"/>
</dbReference>
<dbReference type="EMBL" id="AC087749">
    <property type="status" value="NOT_ANNOTATED_CDS"/>
    <property type="molecule type" value="Genomic_DNA"/>
</dbReference>
<dbReference type="EMBL" id="CH471099">
    <property type="protein sequence ID" value="EAW89305.1"/>
    <property type="molecule type" value="Genomic_DNA"/>
</dbReference>
<dbReference type="EMBL" id="BC118916">
    <property type="protein sequence ID" value="AAI18917.1"/>
    <property type="molecule type" value="mRNA"/>
</dbReference>
<dbReference type="EMBL" id="BC126411">
    <property type="protein sequence ID" value="AAI26412.1"/>
    <property type="molecule type" value="mRNA"/>
</dbReference>
<dbReference type="EMBL" id="AJ251004">
    <property type="protein sequence ID" value="CAB61345.1"/>
    <property type="molecule type" value="Genomic_DNA"/>
</dbReference>
<dbReference type="EMBL" id="Y11107">
    <property type="protein sequence ID" value="CAB61345.1"/>
    <property type="status" value="JOINED"/>
    <property type="molecule type" value="Genomic_DNA"/>
</dbReference>
<dbReference type="EMBL" id="AF011375">
    <property type="protein sequence ID" value="AAB65421.1"/>
    <property type="molecule type" value="mRNA"/>
</dbReference>
<dbReference type="EMBL" id="AF011376">
    <property type="protein sequence ID" value="AAB65422.1"/>
    <property type="molecule type" value="Genomic_DNA"/>
</dbReference>
<dbReference type="CCDS" id="CCDS11727.1">
    <molecule id="P16144-1"/>
</dbReference>
<dbReference type="CCDS" id="CCDS32736.1">
    <molecule id="P16144-3"/>
</dbReference>
<dbReference type="CCDS" id="CCDS58599.1">
    <molecule id="P16144-2"/>
</dbReference>
<dbReference type="PIR" id="JC5545">
    <property type="entry name" value="JC5545"/>
</dbReference>
<dbReference type="PIR" id="S12380">
    <property type="entry name" value="A36429"/>
</dbReference>
<dbReference type="RefSeq" id="NP_000204.3">
    <molecule id="P16144-1"/>
    <property type="nucleotide sequence ID" value="NM_000213.4"/>
</dbReference>
<dbReference type="RefSeq" id="NP_001005619.1">
    <molecule id="P16144-3"/>
    <property type="nucleotide sequence ID" value="NM_001005619.1"/>
</dbReference>
<dbReference type="RefSeq" id="NP_001005731.1">
    <molecule id="P16144-2"/>
    <property type="nucleotide sequence ID" value="NM_001005731.3"/>
</dbReference>
<dbReference type="RefSeq" id="NP_001308052.1">
    <molecule id="P16144-2"/>
    <property type="nucleotide sequence ID" value="NM_001321123.2"/>
</dbReference>
<dbReference type="RefSeq" id="XP_047291883.1">
    <molecule id="P16144-3"/>
    <property type="nucleotide sequence ID" value="XM_047435927.1"/>
</dbReference>
<dbReference type="PDB" id="1QG3">
    <property type="method" value="X-ray"/>
    <property type="resolution" value="2.15 A"/>
    <property type="chains" value="A/B=1126-1320"/>
</dbReference>
<dbReference type="PDB" id="2YRZ">
    <property type="method" value="NMR"/>
    <property type="chains" value="A=1518-1622"/>
</dbReference>
<dbReference type="PDB" id="3F7P">
    <property type="method" value="X-ray"/>
    <property type="resolution" value="2.75 A"/>
    <property type="chains" value="C/D/E=1126-1369"/>
</dbReference>
<dbReference type="PDB" id="3F7Q">
    <property type="method" value="X-ray"/>
    <property type="resolution" value="1.75 A"/>
    <property type="chains" value="A/B=1126-1355"/>
</dbReference>
<dbReference type="PDB" id="3F7R">
    <property type="method" value="X-ray"/>
    <property type="resolution" value="2.04 A"/>
    <property type="chains" value="A=1126-1369"/>
</dbReference>
<dbReference type="PDB" id="3FQ4">
    <property type="method" value="X-ray"/>
    <property type="resolution" value="1.49 A"/>
    <property type="chains" value="A/B=989-1107"/>
</dbReference>
<dbReference type="PDB" id="3FSO">
    <property type="method" value="X-ray"/>
    <property type="resolution" value="1.41 A"/>
    <property type="chains" value="A/B=989-1107"/>
</dbReference>
<dbReference type="PDB" id="3H6A">
    <property type="method" value="X-ray"/>
    <property type="resolution" value="1.61 A"/>
    <property type="chains" value="A/B=989-1107"/>
</dbReference>
<dbReference type="PDB" id="4Q58">
    <property type="method" value="X-ray"/>
    <property type="resolution" value="4.00 A"/>
    <property type="chains" value="C/D=1126-1320"/>
</dbReference>
<dbReference type="PDB" id="4WTW">
    <property type="method" value="X-ray"/>
    <property type="resolution" value="1.61 A"/>
    <property type="chains" value="A/B=1527-1618"/>
</dbReference>
<dbReference type="PDB" id="4WTX">
    <property type="method" value="X-ray"/>
    <property type="resolution" value="1.50 A"/>
    <property type="chains" value="A=1642-1736"/>
</dbReference>
<dbReference type="PDB" id="6GVK">
    <property type="method" value="X-ray"/>
    <property type="resolution" value="1.55 A"/>
    <property type="chains" value="A=1527-1736"/>
</dbReference>
<dbReference type="PDB" id="6GVL">
    <property type="method" value="X-ray"/>
    <property type="resolution" value="2.05 A"/>
    <property type="chains" value="A=1527-1736"/>
</dbReference>
<dbReference type="PDBsum" id="1QG3"/>
<dbReference type="PDBsum" id="2YRZ"/>
<dbReference type="PDBsum" id="3F7P"/>
<dbReference type="PDBsum" id="3F7Q"/>
<dbReference type="PDBsum" id="3F7R"/>
<dbReference type="PDBsum" id="3FQ4"/>
<dbReference type="PDBsum" id="3FSO"/>
<dbReference type="PDBsum" id="3H6A"/>
<dbReference type="PDBsum" id="4Q58"/>
<dbReference type="PDBsum" id="4WTW"/>
<dbReference type="PDBsum" id="4WTX"/>
<dbReference type="PDBsum" id="6GVK"/>
<dbReference type="PDBsum" id="6GVL"/>
<dbReference type="SASBDB" id="P16144"/>
<dbReference type="SMR" id="P16144"/>
<dbReference type="BioGRID" id="109897">
    <property type="interactions" value="123"/>
</dbReference>
<dbReference type="ComplexPortal" id="CPX-1822">
    <property type="entry name" value="Integrin alpha6-beta4 complex"/>
</dbReference>
<dbReference type="CORUM" id="P16144"/>
<dbReference type="DIP" id="DIP-40182N"/>
<dbReference type="ELM" id="P16144"/>
<dbReference type="FunCoup" id="P16144">
    <property type="interactions" value="509"/>
</dbReference>
<dbReference type="IntAct" id="P16144">
    <property type="interactions" value="134"/>
</dbReference>
<dbReference type="MINT" id="P16144"/>
<dbReference type="STRING" id="9606.ENSP00000200181"/>
<dbReference type="DrugBank" id="DB05122">
    <property type="generic name" value="R1295"/>
</dbReference>
<dbReference type="GlyConnect" id="1417">
    <property type="glycosylation" value="1 N-Linked glycan (1 site)"/>
</dbReference>
<dbReference type="GlyCosmos" id="P16144">
    <property type="glycosylation" value="7 sites, 1 glycan"/>
</dbReference>
<dbReference type="GlyGen" id="P16144">
    <property type="glycosylation" value="10 sites, 17 N-linked glycans (1 site), 1 O-linked glycan (4 sites)"/>
</dbReference>
<dbReference type="iPTMnet" id="P16144"/>
<dbReference type="PhosphoSitePlus" id="P16144"/>
<dbReference type="SwissPalm" id="P16144"/>
<dbReference type="BioMuta" id="ITGB4"/>
<dbReference type="DMDM" id="317373584"/>
<dbReference type="CPTAC" id="CPTAC-530"/>
<dbReference type="CPTAC" id="CPTAC-531"/>
<dbReference type="jPOST" id="P16144"/>
<dbReference type="MassIVE" id="P16144"/>
<dbReference type="PaxDb" id="9606-ENSP00000200181"/>
<dbReference type="PeptideAtlas" id="P16144"/>
<dbReference type="ProteomicsDB" id="53292">
    <molecule id="P16144-1"/>
</dbReference>
<dbReference type="ProteomicsDB" id="53293">
    <molecule id="P16144-2"/>
</dbReference>
<dbReference type="ProteomicsDB" id="53294">
    <molecule id="P16144-3"/>
</dbReference>
<dbReference type="ProteomicsDB" id="53295">
    <molecule id="P16144-4"/>
</dbReference>
<dbReference type="ProteomicsDB" id="53296">
    <molecule id="P16144-5"/>
</dbReference>
<dbReference type="Pumba" id="P16144"/>
<dbReference type="ABCD" id="P16144">
    <property type="antibodies" value="3 sequenced antibodies"/>
</dbReference>
<dbReference type="Antibodypedia" id="3934">
    <property type="antibodies" value="1066 antibodies from 46 providers"/>
</dbReference>
<dbReference type="DNASU" id="3691"/>
<dbReference type="Ensembl" id="ENST00000200181.8">
    <molecule id="P16144-1"/>
    <property type="protein sequence ID" value="ENSP00000200181.3"/>
    <property type="gene ID" value="ENSG00000132470.14"/>
</dbReference>
<dbReference type="Ensembl" id="ENST00000449880.7">
    <molecule id="P16144-3"/>
    <property type="protein sequence ID" value="ENSP00000400217.2"/>
    <property type="gene ID" value="ENSG00000132470.14"/>
</dbReference>
<dbReference type="Ensembl" id="ENST00000450894.7">
    <molecule id="P16144-2"/>
    <property type="protein sequence ID" value="ENSP00000405536.3"/>
    <property type="gene ID" value="ENSG00000132470.14"/>
</dbReference>
<dbReference type="Ensembl" id="ENST00000579662.5">
    <molecule id="P16144-2"/>
    <property type="protein sequence ID" value="ENSP00000463651.1"/>
    <property type="gene ID" value="ENSG00000132470.14"/>
</dbReference>
<dbReference type="GeneID" id="3691"/>
<dbReference type="KEGG" id="hsa:3691"/>
<dbReference type="MANE-Select" id="ENST00000200181.8">
    <property type="protein sequence ID" value="ENSP00000200181.3"/>
    <property type="RefSeq nucleotide sequence ID" value="NM_000213.5"/>
    <property type="RefSeq protein sequence ID" value="NP_000204.3"/>
</dbReference>
<dbReference type="UCSC" id="uc002jpg.3">
    <molecule id="P16144-1"/>
    <property type="organism name" value="human"/>
</dbReference>
<dbReference type="AGR" id="HGNC:6158"/>
<dbReference type="CTD" id="3691"/>
<dbReference type="DisGeNET" id="3691"/>
<dbReference type="GeneCards" id="ITGB4"/>
<dbReference type="GeneReviews" id="ITGB4"/>
<dbReference type="HGNC" id="HGNC:6158">
    <property type="gene designation" value="ITGB4"/>
</dbReference>
<dbReference type="HPA" id="ENSG00000132470">
    <property type="expression patterns" value="Tissue enhanced (salivary gland, skin)"/>
</dbReference>
<dbReference type="MalaCards" id="ITGB4"/>
<dbReference type="MIM" id="147557">
    <property type="type" value="gene"/>
</dbReference>
<dbReference type="MIM" id="226730">
    <property type="type" value="phenotype"/>
</dbReference>
<dbReference type="MIM" id="619816">
    <property type="type" value="phenotype"/>
</dbReference>
<dbReference type="neXtProt" id="NX_P16144"/>
<dbReference type="OpenTargets" id="ENSG00000132470"/>
<dbReference type="Orphanet" id="1114">
    <property type="disease" value="Aplasia cutis congenita"/>
</dbReference>
<dbReference type="Orphanet" id="158684">
    <property type="disease" value="Epidermolysis bullosa simplex with pyloric atresia"/>
</dbReference>
<dbReference type="Orphanet" id="79402">
    <property type="disease" value="Intermediate generalized junctional epidermolysis bullosa"/>
</dbReference>
<dbReference type="Orphanet" id="79403">
    <property type="disease" value="Junctional epidermolysis bullosa with pyloric atresia"/>
</dbReference>
<dbReference type="Orphanet" id="251393">
    <property type="disease" value="Localized junctional epidermolysis bullosa"/>
</dbReference>
<dbReference type="PharmGKB" id="PA29957"/>
<dbReference type="VEuPathDB" id="HostDB:ENSG00000132470"/>
<dbReference type="eggNOG" id="KOG1226">
    <property type="taxonomic scope" value="Eukaryota"/>
</dbReference>
<dbReference type="GeneTree" id="ENSGT01130000278313"/>
<dbReference type="HOGENOM" id="CLU_237558_0_0_1"/>
<dbReference type="InParanoid" id="P16144"/>
<dbReference type="OMA" id="HTKFRQQ"/>
<dbReference type="OrthoDB" id="410592at2759"/>
<dbReference type="PAN-GO" id="P16144">
    <property type="GO annotations" value="8 GO annotations based on evolutionary models"/>
</dbReference>
<dbReference type="PhylomeDB" id="P16144"/>
<dbReference type="TreeFam" id="TF105392"/>
<dbReference type="PathwayCommons" id="P16144"/>
<dbReference type="Reactome" id="R-HSA-2022090">
    <property type="pathway name" value="Assembly of collagen fibrils and other multimeric structures"/>
</dbReference>
<dbReference type="Reactome" id="R-HSA-3000157">
    <property type="pathway name" value="Laminin interactions"/>
</dbReference>
<dbReference type="Reactome" id="R-HSA-3000170">
    <property type="pathway name" value="Syndecan interactions"/>
</dbReference>
<dbReference type="Reactome" id="R-HSA-446107">
    <property type="pathway name" value="Type I hemidesmosome assembly"/>
</dbReference>
<dbReference type="Reactome" id="R-HSA-9725554">
    <property type="pathway name" value="Differentiation of Keratinocytes in Interfollicular Epidermis in Mammalian Skin"/>
</dbReference>
<dbReference type="SignaLink" id="P16144"/>
<dbReference type="SIGNOR" id="P16144"/>
<dbReference type="BioGRID-ORCS" id="3691">
    <property type="hits" value="12 hits in 1160 CRISPR screens"/>
</dbReference>
<dbReference type="ChiTaRS" id="ITGB4">
    <property type="organism name" value="human"/>
</dbReference>
<dbReference type="EvolutionaryTrace" id="P16144"/>
<dbReference type="GeneWiki" id="ITGB4"/>
<dbReference type="GenomeRNAi" id="3691"/>
<dbReference type="Pharos" id="P16144">
    <property type="development level" value="Tbio"/>
</dbReference>
<dbReference type="PRO" id="PR:P16144"/>
<dbReference type="Proteomes" id="UP000005640">
    <property type="component" value="Chromosome 17"/>
</dbReference>
<dbReference type="RNAct" id="P16144">
    <property type="molecule type" value="protein"/>
</dbReference>
<dbReference type="Bgee" id="ENSG00000132470">
    <property type="expression patterns" value="Expressed in tibial nerve and 188 other cell types or tissues"/>
</dbReference>
<dbReference type="ExpressionAtlas" id="P16144">
    <property type="expression patterns" value="baseline and differential"/>
</dbReference>
<dbReference type="GO" id="GO:0009925">
    <property type="term" value="C:basal plasma membrane"/>
    <property type="evidence" value="ECO:0007669"/>
    <property type="project" value="Ensembl"/>
</dbReference>
<dbReference type="GO" id="GO:0005604">
    <property type="term" value="C:basement membrane"/>
    <property type="evidence" value="ECO:0007669"/>
    <property type="project" value="Ensembl"/>
</dbReference>
<dbReference type="GO" id="GO:0030054">
    <property type="term" value="C:cell junction"/>
    <property type="evidence" value="ECO:0000314"/>
    <property type="project" value="HPA"/>
</dbReference>
<dbReference type="GO" id="GO:0031252">
    <property type="term" value="C:cell leading edge"/>
    <property type="evidence" value="ECO:0000314"/>
    <property type="project" value="UniProtKB"/>
</dbReference>
<dbReference type="GO" id="GO:0009986">
    <property type="term" value="C:cell surface"/>
    <property type="evidence" value="ECO:0000314"/>
    <property type="project" value="UniProtKB"/>
</dbReference>
<dbReference type="GO" id="GO:0070062">
    <property type="term" value="C:extracellular exosome"/>
    <property type="evidence" value="ECO:0007005"/>
    <property type="project" value="UniProtKB"/>
</dbReference>
<dbReference type="GO" id="GO:0005925">
    <property type="term" value="C:focal adhesion"/>
    <property type="evidence" value="ECO:0000318"/>
    <property type="project" value="GO_Central"/>
</dbReference>
<dbReference type="GO" id="GO:0030056">
    <property type="term" value="C:hemidesmosome"/>
    <property type="evidence" value="ECO:0000314"/>
    <property type="project" value="UniProtKB"/>
</dbReference>
<dbReference type="GO" id="GO:0008305">
    <property type="term" value="C:integrin complex"/>
    <property type="evidence" value="ECO:0000318"/>
    <property type="project" value="GO_Central"/>
</dbReference>
<dbReference type="GO" id="GO:0031965">
    <property type="term" value="C:nuclear membrane"/>
    <property type="evidence" value="ECO:0000314"/>
    <property type="project" value="HPA"/>
</dbReference>
<dbReference type="GO" id="GO:0005730">
    <property type="term" value="C:nucleolus"/>
    <property type="evidence" value="ECO:0000314"/>
    <property type="project" value="HPA"/>
</dbReference>
<dbReference type="GO" id="GO:0005886">
    <property type="term" value="C:plasma membrane"/>
    <property type="evidence" value="ECO:0000314"/>
    <property type="project" value="HPA"/>
</dbReference>
<dbReference type="GO" id="GO:0043235">
    <property type="term" value="C:receptor complex"/>
    <property type="evidence" value="ECO:0000314"/>
    <property type="project" value="MGI"/>
</dbReference>
<dbReference type="GO" id="GO:0001664">
    <property type="term" value="F:G protein-coupled receptor binding"/>
    <property type="evidence" value="ECO:0000353"/>
    <property type="project" value="UniProtKB"/>
</dbReference>
<dbReference type="GO" id="GO:0005178">
    <property type="term" value="F:integrin binding"/>
    <property type="evidence" value="ECO:0000318"/>
    <property type="project" value="GO_Central"/>
</dbReference>
<dbReference type="GO" id="GO:0046872">
    <property type="term" value="F:metal ion binding"/>
    <property type="evidence" value="ECO:0007669"/>
    <property type="project" value="UniProtKB-KW"/>
</dbReference>
<dbReference type="GO" id="GO:0006914">
    <property type="term" value="P:autophagy"/>
    <property type="evidence" value="ECO:0000315"/>
    <property type="project" value="UniProtKB"/>
</dbReference>
<dbReference type="GO" id="GO:0007155">
    <property type="term" value="P:cell adhesion"/>
    <property type="evidence" value="ECO:0000303"/>
    <property type="project" value="ProtInc"/>
</dbReference>
<dbReference type="GO" id="GO:0033627">
    <property type="term" value="P:cell adhesion mediated by integrin"/>
    <property type="evidence" value="ECO:0000318"/>
    <property type="project" value="GO_Central"/>
</dbReference>
<dbReference type="GO" id="GO:0016477">
    <property type="term" value="P:cell migration"/>
    <property type="evidence" value="ECO:0000318"/>
    <property type="project" value="GO_Central"/>
</dbReference>
<dbReference type="GO" id="GO:0048870">
    <property type="term" value="P:cell motility"/>
    <property type="evidence" value="ECO:0000315"/>
    <property type="project" value="UniProtKB"/>
</dbReference>
<dbReference type="GO" id="GO:0098609">
    <property type="term" value="P:cell-cell adhesion"/>
    <property type="evidence" value="ECO:0000318"/>
    <property type="project" value="GO_Central"/>
</dbReference>
<dbReference type="GO" id="GO:0007160">
    <property type="term" value="P:cell-matrix adhesion"/>
    <property type="evidence" value="ECO:0000315"/>
    <property type="project" value="UniProtKB"/>
</dbReference>
<dbReference type="GO" id="GO:0046847">
    <property type="term" value="P:filopodium assembly"/>
    <property type="evidence" value="ECO:0007669"/>
    <property type="project" value="Ensembl"/>
</dbReference>
<dbReference type="GO" id="GO:0031581">
    <property type="term" value="P:hemidesmosome assembly"/>
    <property type="evidence" value="ECO:0000314"/>
    <property type="project" value="UniProtKB"/>
</dbReference>
<dbReference type="GO" id="GO:0007229">
    <property type="term" value="P:integrin-mediated signaling pathway"/>
    <property type="evidence" value="ECO:0000318"/>
    <property type="project" value="GO_Central"/>
</dbReference>
<dbReference type="GO" id="GO:0048333">
    <property type="term" value="P:mesodermal cell differentiation"/>
    <property type="evidence" value="ECO:0000270"/>
    <property type="project" value="UniProtKB"/>
</dbReference>
<dbReference type="GO" id="GO:0035878">
    <property type="term" value="P:nail development"/>
    <property type="evidence" value="ECO:0000315"/>
    <property type="project" value="UniProtKB"/>
</dbReference>
<dbReference type="GO" id="GO:0032290">
    <property type="term" value="P:peripheral nervous system myelin formation"/>
    <property type="evidence" value="ECO:0007669"/>
    <property type="project" value="Ensembl"/>
</dbReference>
<dbReference type="GO" id="GO:0009611">
    <property type="term" value="P:response to wounding"/>
    <property type="evidence" value="ECO:0000314"/>
    <property type="project" value="UniProtKB"/>
</dbReference>
<dbReference type="GO" id="GO:0043589">
    <property type="term" value="P:skin morphogenesis"/>
    <property type="evidence" value="ECO:0000315"/>
    <property type="project" value="UniProtKB"/>
</dbReference>
<dbReference type="GO" id="GO:0061450">
    <property type="term" value="P:trophoblast cell migration"/>
    <property type="evidence" value="ECO:0007669"/>
    <property type="project" value="Ensembl"/>
</dbReference>
<dbReference type="CDD" id="cd00063">
    <property type="entry name" value="FN3"/>
    <property type="match status" value="4"/>
</dbReference>
<dbReference type="FunFam" id="2.10.25.10:FF:000212">
    <property type="entry name" value="Integrin beta"/>
    <property type="match status" value="1"/>
</dbReference>
<dbReference type="FunFam" id="2.10.25.10:FF:000215">
    <property type="entry name" value="Integrin beta"/>
    <property type="match status" value="1"/>
</dbReference>
<dbReference type="FunFam" id="2.10.25.10:FF:000287">
    <property type="entry name" value="Integrin beta"/>
    <property type="match status" value="1"/>
</dbReference>
<dbReference type="FunFam" id="2.60.40.10:FF:000146">
    <property type="entry name" value="Integrin beta"/>
    <property type="match status" value="2"/>
</dbReference>
<dbReference type="FunFam" id="2.60.40.10:FF:000424">
    <property type="entry name" value="Integrin beta"/>
    <property type="match status" value="1"/>
</dbReference>
<dbReference type="FunFam" id="2.60.40.10:FF:000452">
    <property type="entry name" value="Integrin beta"/>
    <property type="match status" value="1"/>
</dbReference>
<dbReference type="FunFam" id="2.60.40.1510:FF:000006">
    <property type="entry name" value="Integrin beta"/>
    <property type="match status" value="1"/>
</dbReference>
<dbReference type="FunFam" id="2.60.40.2030:FF:000004">
    <property type="entry name" value="Integrin beta"/>
    <property type="match status" value="1"/>
</dbReference>
<dbReference type="FunFam" id="3.30.1680.10:FF:000002">
    <property type="entry name" value="Integrin beta"/>
    <property type="match status" value="1"/>
</dbReference>
<dbReference type="FunFam" id="3.40.50.410:FF:000036">
    <property type="entry name" value="Integrin beta"/>
    <property type="match status" value="1"/>
</dbReference>
<dbReference type="FunFam" id="4.10.1240.30:FF:000003">
    <property type="entry name" value="Integrin beta"/>
    <property type="match status" value="1"/>
</dbReference>
<dbReference type="Gene3D" id="2.60.40.2030">
    <property type="match status" value="1"/>
</dbReference>
<dbReference type="Gene3D" id="4.10.1240.30">
    <property type="match status" value="1"/>
</dbReference>
<dbReference type="Gene3D" id="2.60.40.10">
    <property type="entry name" value="Immunoglobulins"/>
    <property type="match status" value="4"/>
</dbReference>
<dbReference type="Gene3D" id="2.10.25.10">
    <property type="entry name" value="Laminin"/>
    <property type="match status" value="3"/>
</dbReference>
<dbReference type="Gene3D" id="3.30.1680.10">
    <property type="entry name" value="ligand-binding face of the semaphorins, domain 2"/>
    <property type="match status" value="1"/>
</dbReference>
<dbReference type="Gene3D" id="2.60.40.1510">
    <property type="entry name" value="ntegrin, alpha v. Chain A, domain 3"/>
    <property type="match status" value="1"/>
</dbReference>
<dbReference type="Gene3D" id="3.40.50.410">
    <property type="entry name" value="von Willebrand factor, type A domain"/>
    <property type="match status" value="1"/>
</dbReference>
<dbReference type="InterPro" id="IPR038081">
    <property type="entry name" value="CalX-like_sf"/>
</dbReference>
<dbReference type="InterPro" id="IPR003644">
    <property type="entry name" value="Calx_beta"/>
</dbReference>
<dbReference type="InterPro" id="IPR000742">
    <property type="entry name" value="EGF-like_dom"/>
</dbReference>
<dbReference type="InterPro" id="IPR003961">
    <property type="entry name" value="FN3_dom"/>
</dbReference>
<dbReference type="InterPro" id="IPR036116">
    <property type="entry name" value="FN3_sf"/>
</dbReference>
<dbReference type="InterPro" id="IPR040622">
    <property type="entry name" value="I-EGF_1"/>
</dbReference>
<dbReference type="InterPro" id="IPR013783">
    <property type="entry name" value="Ig-like_fold"/>
</dbReference>
<dbReference type="InterPro" id="IPR033760">
    <property type="entry name" value="Integrin_beta_N"/>
</dbReference>
<dbReference type="InterPro" id="IPR015812">
    <property type="entry name" value="Integrin_bsu"/>
</dbReference>
<dbReference type="InterPro" id="IPR012013">
    <property type="entry name" value="Integrin_bsu-4"/>
</dbReference>
<dbReference type="InterPro" id="IPR012896">
    <property type="entry name" value="Integrin_bsu_tail"/>
</dbReference>
<dbReference type="InterPro" id="IPR036349">
    <property type="entry name" value="Integrin_bsu_tail_dom_sf"/>
</dbReference>
<dbReference type="InterPro" id="IPR002369">
    <property type="entry name" value="Integrin_bsu_VWA"/>
</dbReference>
<dbReference type="InterPro" id="IPR016201">
    <property type="entry name" value="PSI"/>
</dbReference>
<dbReference type="InterPro" id="IPR036465">
    <property type="entry name" value="vWFA_dom_sf"/>
</dbReference>
<dbReference type="PANTHER" id="PTHR10082">
    <property type="entry name" value="INTEGRIN BETA SUBUNIT"/>
    <property type="match status" value="1"/>
</dbReference>
<dbReference type="PANTHER" id="PTHR10082:SF42">
    <property type="entry name" value="INTEGRIN BETA-4"/>
    <property type="match status" value="1"/>
</dbReference>
<dbReference type="Pfam" id="PF03160">
    <property type="entry name" value="Calx-beta"/>
    <property type="match status" value="1"/>
</dbReference>
<dbReference type="Pfam" id="PF23106">
    <property type="entry name" value="EGF_Teneurin"/>
    <property type="match status" value="1"/>
</dbReference>
<dbReference type="Pfam" id="PF00041">
    <property type="entry name" value="fn3"/>
    <property type="match status" value="4"/>
</dbReference>
<dbReference type="Pfam" id="PF18372">
    <property type="entry name" value="I-EGF_1"/>
    <property type="match status" value="1"/>
</dbReference>
<dbReference type="Pfam" id="PF07965">
    <property type="entry name" value="Integrin_B_tail"/>
    <property type="match status" value="1"/>
</dbReference>
<dbReference type="Pfam" id="PF00362">
    <property type="entry name" value="Integrin_beta"/>
    <property type="match status" value="1"/>
</dbReference>
<dbReference type="Pfam" id="PF17205">
    <property type="entry name" value="PSI_integrin"/>
    <property type="match status" value="1"/>
</dbReference>
<dbReference type="PIRSF" id="PIRSF002513">
    <property type="entry name" value="Integrin_B4"/>
    <property type="match status" value="1"/>
</dbReference>
<dbReference type="PRINTS" id="PR00014">
    <property type="entry name" value="FNTYPEIII"/>
</dbReference>
<dbReference type="PRINTS" id="PR01186">
    <property type="entry name" value="INTEGRINB"/>
</dbReference>
<dbReference type="SMART" id="SM00237">
    <property type="entry name" value="Calx_beta"/>
    <property type="match status" value="1"/>
</dbReference>
<dbReference type="SMART" id="SM00060">
    <property type="entry name" value="FN3"/>
    <property type="match status" value="4"/>
</dbReference>
<dbReference type="SMART" id="SM00187">
    <property type="entry name" value="INB"/>
    <property type="match status" value="1"/>
</dbReference>
<dbReference type="SMART" id="SM01242">
    <property type="entry name" value="Integrin_B_tail"/>
    <property type="match status" value="1"/>
</dbReference>
<dbReference type="SMART" id="SM00423">
    <property type="entry name" value="PSI"/>
    <property type="match status" value="1"/>
</dbReference>
<dbReference type="SUPFAM" id="SSF141072">
    <property type="entry name" value="CalX-like"/>
    <property type="match status" value="1"/>
</dbReference>
<dbReference type="SUPFAM" id="SSF57196">
    <property type="entry name" value="EGF/Laminin"/>
    <property type="match status" value="2"/>
</dbReference>
<dbReference type="SUPFAM" id="SSF49265">
    <property type="entry name" value="Fibronectin type III"/>
    <property type="match status" value="2"/>
</dbReference>
<dbReference type="SUPFAM" id="SSF69687">
    <property type="entry name" value="Integrin beta tail domain"/>
    <property type="match status" value="1"/>
</dbReference>
<dbReference type="SUPFAM" id="SSF103575">
    <property type="entry name" value="Plexin repeat"/>
    <property type="match status" value="1"/>
</dbReference>
<dbReference type="SUPFAM" id="SSF53300">
    <property type="entry name" value="vWA-like"/>
    <property type="match status" value="1"/>
</dbReference>
<dbReference type="PROSITE" id="PS00022">
    <property type="entry name" value="EGF_1"/>
    <property type="match status" value="2"/>
</dbReference>
<dbReference type="PROSITE" id="PS01186">
    <property type="entry name" value="EGF_2"/>
    <property type="match status" value="2"/>
</dbReference>
<dbReference type="PROSITE" id="PS50853">
    <property type="entry name" value="FN3"/>
    <property type="match status" value="4"/>
</dbReference>
<dbReference type="PROSITE" id="PS00243">
    <property type="entry name" value="I_EGF_1"/>
    <property type="match status" value="2"/>
</dbReference>
<dbReference type="PROSITE" id="PS52047">
    <property type="entry name" value="I_EGF_2"/>
    <property type="match status" value="4"/>
</dbReference>
<organism>
    <name type="scientific">Homo sapiens</name>
    <name type="common">Human</name>
    <dbReference type="NCBI Taxonomy" id="9606"/>
    <lineage>
        <taxon>Eukaryota</taxon>
        <taxon>Metazoa</taxon>
        <taxon>Chordata</taxon>
        <taxon>Craniata</taxon>
        <taxon>Vertebrata</taxon>
        <taxon>Euteleostomi</taxon>
        <taxon>Mammalia</taxon>
        <taxon>Eutheria</taxon>
        <taxon>Euarchontoglires</taxon>
        <taxon>Primates</taxon>
        <taxon>Haplorrhini</taxon>
        <taxon>Catarrhini</taxon>
        <taxon>Hominidae</taxon>
        <taxon>Homo</taxon>
    </lineage>
</organism>
<proteinExistence type="evidence at protein level"/>
<keyword id="KW-0002">3D-structure</keyword>
<keyword id="KW-0025">Alternative splicing</keyword>
<keyword id="KW-0106">Calcium</keyword>
<keyword id="KW-0130">Cell adhesion</keyword>
<keyword id="KW-0965">Cell junction</keyword>
<keyword id="KW-1003">Cell membrane</keyword>
<keyword id="KW-0903">Direct protein sequencing</keyword>
<keyword id="KW-0225">Disease variant</keyword>
<keyword id="KW-1015">Disulfide bond</keyword>
<keyword id="KW-0245">EGF-like domain</keyword>
<keyword id="KW-0263">Epidermolysis bullosa</keyword>
<keyword id="KW-0325">Glycoprotein</keyword>
<keyword id="KW-0401">Integrin</keyword>
<keyword id="KW-0449">Lipoprotein</keyword>
<keyword id="KW-0460">Magnesium</keyword>
<keyword id="KW-0472">Membrane</keyword>
<keyword id="KW-0479">Metal-binding</keyword>
<keyword id="KW-0564">Palmitate</keyword>
<keyword id="KW-0597">Phosphoprotein</keyword>
<keyword id="KW-1267">Proteomics identification</keyword>
<keyword id="KW-0675">Receptor</keyword>
<keyword id="KW-1185">Reference proteome</keyword>
<keyword id="KW-0677">Repeat</keyword>
<keyword id="KW-0732">Signal</keyword>
<keyword id="KW-0812">Transmembrane</keyword>
<keyword id="KW-1133">Transmembrane helix</keyword>
<sequence>MAGPRPSPWARLLLAALISVSLSGTLANRCKKAPVKSCTECVRVDKDCAYCTDEMFRDRRCNTQAELLAAGCQRESIVVMESSFQITEETQIDTTLRRSQMSPQGLRVRLRPGEERHFELEVFEPLESPVDLYILMDFSNSMSDDLDNLKKMGQNLARVLSQLTSDYTIGFGKFVDKVSVPQTDMRPEKLKEPWPNSDPPFSFKNVISLTEDVDEFRNKLQGERISGNLDAPEGGFDAILQTAVCTRDIGWRPDSTHLLVFSTESAFHYEADGANVLAGIMSRNDERCHLDTTGTYTQYRTQDYPSVPTLVRLLAKHNIIPIFAVTNYSYSYYEKLHTYFPVSSLGVLQEDSSNIVELLEEAFNRIRSNLDIRALDSPRGLRTEVTSKMFQKTRTGSFHIRRGEVGIYQVQLRALEHVDGTHVCQLPEDQKGNIHLKPSFSDGLKMDAGIICDVCTCELQKEVRSARCSFNGDFVCGQCVCSEGWSGQTCNCSTGSLSDIQPCLREGEDKPCSGRGECQCGHCVCYGEGRYEGQFCEYDNFQCPRTSGFLCNDRGRCSMGQCVCEPGWTGPSCDCPLSNATCIDSNGGICNGRGHCECGRCHCHQQSLYTDTICEINYSAIHPGLCEDLRSCVQCQAWGTGEKKGRTCEECNFKVKMVDELKRAEEVVVRCSFRDEDDDCTYSYTMEGDGAPGPNSTVLVHKKKDCPPGSFWWLIPLLLLLLPLLALLLLLCWKYCACCKACLALLPCCNRGHMVGFKEDHYMLRENLMASDHLDTPMLRSGNLKGRDVVRWKVTNNMQRPGFATHAASINPTELVPYGLSLRLARLCTENLLKPDTRECAQLRQEVEENLNEVYRQISGVHKLQQTKFRQQPNAGKKQDHTIVDTVLMAPRSAKPALLKLTEKQVEQRAFHDLKVAPGYYTLTADQDARGMVEFQEGVELVDVRVPLFIRPEDDDEKQLLVEAIDVPAGTATLGRRLVNITIIKEQARDVVSFEQPEFSVSRGDQVARIPVIRRVLDGGKSQVSYRTQDGTAQGNRDYIPVEGELLFQPGEAWKELQVKLLELQEVDSLLRGRQVRRFHVQLSNPKFGAHLGQPHSTTIIIRDPDELDRSFTSQMLSSQPPPHGDLGAPQNPNAKAAGSRKIHFNWLPPSGKPMGYRVKYWIQGDSESEAHLLDSKVPSVELTNLYPYCDYEMKVCAYGAQGEGPYSSLVSCRTHQEVPSEPGRLAFNVVSSTVTQLSWAEPAETNGEITAYEVCYGLVNDDNRPIGPMKKVLVDNPKNRMLLIENLRESQPYRYTVKARNGAGWGPEREAIINLATQPKRPMSIPIIPDIPIVDAQSGEDYDSFLMYSDDVLRSPSGSQRPSVSDDTGCGWKFEPLLGEELDLRRVTWRLPPELIPRLSASSGRSSDAEAPHGPPDDGGAGGKGGSLPRSATPGPPGEHLVNGRMDFAFPGSTNSLHRMTTTSAAAYGTHLSPHVPHRVLSTSSTLTRDYNSLTRSEHSHSTTLPRDYSTLTSVSSHDSRLTAGVPDTPTRLVFSALGPTSLRVSWQEPRCERPLQGYSVEYQLLNGGELHRLNIPNPAQTSVVVEDLLPNHSYVFRVRAQSQEGWGREREGVITIESQVHPQSPLCPLPGSAFTLSTPSAPGPLVFTALSPDSLQLSWERPRRPNGDIVGYLVTCEMAQGGGPATAFRVDGDSPESRLTVPGLSENVPYKFKVQARTTEGFGPEREGIITIESQDGGPFPQLGSRAGLFQHPLQSEYSSITTTHTSATEPFLVDGLTLGAQHLEAGGSLTRHVTQEFVSRTLTTSGTLSTHMDQQFFQT</sequence>